<keyword id="KW-0002">3D-structure</keyword>
<keyword id="KW-0025">Alternative splicing</keyword>
<keyword id="KW-0067">ATP-binding</keyword>
<keyword id="KW-1003">Cell membrane</keyword>
<keyword id="KW-0966">Cell projection</keyword>
<keyword id="KW-0963">Cytoplasm</keyword>
<keyword id="KW-0217">Developmental protein</keyword>
<keyword id="KW-0221">Differentiation</keyword>
<keyword id="KW-0225">Disease variant</keyword>
<keyword id="KW-1015">Disulfide bond</keyword>
<keyword id="KW-0967">Endosome</keyword>
<keyword id="KW-0887">Epilepsy</keyword>
<keyword id="KW-0325">Glycoprotein</keyword>
<keyword id="KW-0393">Immunoglobulin domain</keyword>
<keyword id="KW-0418">Kinase</keyword>
<keyword id="KW-0433">Leucine-rich repeat</keyword>
<keyword id="KW-0472">Membrane</keyword>
<keyword id="KW-0524">Neurogenesis</keyword>
<keyword id="KW-0547">Nucleotide-binding</keyword>
<keyword id="KW-0550">Obesity</keyword>
<keyword id="KW-0597">Phosphoprotein</keyword>
<keyword id="KW-1267">Proteomics identification</keyword>
<keyword id="KW-0675">Receptor</keyword>
<keyword id="KW-1185">Reference proteome</keyword>
<keyword id="KW-0677">Repeat</keyword>
<keyword id="KW-0732">Signal</keyword>
<keyword id="KW-0770">Synapse</keyword>
<keyword id="KW-0808">Transferase</keyword>
<keyword id="KW-0812">Transmembrane</keyword>
<keyword id="KW-1133">Transmembrane helix</keyword>
<keyword id="KW-0829">Tyrosine-protein kinase</keyword>
<keyword id="KW-0832">Ubl conjugation</keyword>
<reference key="1">
    <citation type="journal article" date="1995" name="Genomics">
        <title>Cloning and chromosomal localization of the human TRK-B tyrosine kinase receptor gene (NTRK2).</title>
        <authorList>
            <person name="Nakagawara A."/>
            <person name="Liu X.-G."/>
            <person name="Ikegaki N."/>
            <person name="White P.S."/>
            <person name="Yamashiro D.J."/>
            <person name="Nycum L.M."/>
            <person name="Biegel J.A."/>
            <person name="Brodeur G.M."/>
        </authorList>
    </citation>
    <scope>NUCLEOTIDE SEQUENCE [MRNA] (ISOFORM TRKB)</scope>
    <source>
        <tissue>Hippocampus</tissue>
    </source>
</reference>
<reference key="2">
    <citation type="journal article" date="1995" name="J. Neurosci.">
        <title>Human trks: molecular cloning, tissue distribution, and expression of extracellular domain immunoadhesins.</title>
        <authorList>
            <person name="Shelton D.L."/>
            <person name="Sutherland J."/>
            <person name="Gripp J."/>
            <person name="Camerato T."/>
            <person name="Armanini M.P."/>
            <person name="Phillips H.S."/>
            <person name="Carroll K."/>
            <person name="Spencer S.D."/>
            <person name="Levinson A.D."/>
        </authorList>
    </citation>
    <scope>NUCLEOTIDE SEQUENCE [MRNA] (ISOFORMS TRKB AND TRKB-T1)</scope>
    <source>
        <tissue>Brain</tissue>
    </source>
</reference>
<reference key="3">
    <citation type="journal article" date="1994" name="Neuroscience">
        <title>Cloning of a non-catalytic form of human trkB and distribution of messenger RNA for trkB in human brain.</title>
        <authorList>
            <person name="Allen S.J."/>
            <person name="Dawbarn D."/>
            <person name="Eckford S.D."/>
            <person name="Wilcock G.K."/>
            <person name="Ashcroft M."/>
            <person name="Colebrook S.M."/>
            <person name="Feeney R."/>
            <person name="Macgowan S.H."/>
        </authorList>
    </citation>
    <scope>NUCLEOTIDE SEQUENCE [MRNA] (ISOFORM TRKB-T1)</scope>
    <scope>TISSUE SPECIFICITY</scope>
    <scope>DEVELOPMENTAL STAGE</scope>
    <source>
        <tissue>Hippocampus</tissue>
    </source>
</reference>
<reference key="4">
    <citation type="journal article" date="2002" name="Biochem. Biophys. Res. Commun.">
        <title>Analysis of the human TrkB gene genomic organization reveals novel TrkB isoforms, unusual gene length, and splicing mechanism.</title>
        <authorList>
            <person name="Stoilov P."/>
            <person name="Castren E."/>
            <person name="Stamm S."/>
        </authorList>
    </citation>
    <scope>NUCLEOTIDE SEQUENCE [MRNA] (ISOFORMS TRKB; TRKB-T1; TRKB-T-SHC; 4 AND 5)</scope>
    <scope>ALTERNATIVE SPLICING</scope>
    <scope>TISSUE SPECIFICITY</scope>
    <scope>SUBCELLULAR LOCATION</scope>
</reference>
<reference key="5">
    <citation type="submission" date="2002-05" db="EMBL/GenBank/DDBJ databases">
        <title>Full length truncated TrkB sequence identified in a screen for genes regulated by ischemic preconditioning.</title>
        <authorList>
            <person name="Steinbeck J.A."/>
            <person name="Thomsen S."/>
            <person name="Wessig J."/>
            <person name="Leypoldt F."/>
            <person name="Lewerenz J."/>
            <person name="Methner A."/>
        </authorList>
    </citation>
    <scope>NUCLEOTIDE SEQUENCE [MRNA] (ISOFORM TRKB-T1)</scope>
    <scope>VARIANT ARG-309</scope>
</reference>
<reference key="6">
    <citation type="journal article" date="2004" name="Nat. Genet.">
        <title>Complete sequencing and characterization of 21,243 full-length human cDNAs.</title>
        <authorList>
            <person name="Ota T."/>
            <person name="Suzuki Y."/>
            <person name="Nishikawa T."/>
            <person name="Otsuki T."/>
            <person name="Sugiyama T."/>
            <person name="Irie R."/>
            <person name="Wakamatsu A."/>
            <person name="Hayashi K."/>
            <person name="Sato H."/>
            <person name="Nagai K."/>
            <person name="Kimura K."/>
            <person name="Makita H."/>
            <person name="Sekine M."/>
            <person name="Obayashi M."/>
            <person name="Nishi T."/>
            <person name="Shibahara T."/>
            <person name="Tanaka T."/>
            <person name="Ishii S."/>
            <person name="Yamamoto J."/>
            <person name="Saito K."/>
            <person name="Kawai Y."/>
            <person name="Isono Y."/>
            <person name="Nakamura Y."/>
            <person name="Nagahari K."/>
            <person name="Murakami K."/>
            <person name="Yasuda T."/>
            <person name="Iwayanagi T."/>
            <person name="Wagatsuma M."/>
            <person name="Shiratori A."/>
            <person name="Sudo H."/>
            <person name="Hosoiri T."/>
            <person name="Kaku Y."/>
            <person name="Kodaira H."/>
            <person name="Kondo H."/>
            <person name="Sugawara M."/>
            <person name="Takahashi M."/>
            <person name="Kanda K."/>
            <person name="Yokoi T."/>
            <person name="Furuya T."/>
            <person name="Kikkawa E."/>
            <person name="Omura Y."/>
            <person name="Abe K."/>
            <person name="Kamihara K."/>
            <person name="Katsuta N."/>
            <person name="Sato K."/>
            <person name="Tanikawa M."/>
            <person name="Yamazaki M."/>
            <person name="Ninomiya K."/>
            <person name="Ishibashi T."/>
            <person name="Yamashita H."/>
            <person name="Murakawa K."/>
            <person name="Fujimori K."/>
            <person name="Tanai H."/>
            <person name="Kimata M."/>
            <person name="Watanabe M."/>
            <person name="Hiraoka S."/>
            <person name="Chiba Y."/>
            <person name="Ishida S."/>
            <person name="Ono Y."/>
            <person name="Takiguchi S."/>
            <person name="Watanabe S."/>
            <person name="Yosida M."/>
            <person name="Hotuta T."/>
            <person name="Kusano J."/>
            <person name="Kanehori K."/>
            <person name="Takahashi-Fujii A."/>
            <person name="Hara H."/>
            <person name="Tanase T.-O."/>
            <person name="Nomura Y."/>
            <person name="Togiya S."/>
            <person name="Komai F."/>
            <person name="Hara R."/>
            <person name="Takeuchi K."/>
            <person name="Arita M."/>
            <person name="Imose N."/>
            <person name="Musashino K."/>
            <person name="Yuuki H."/>
            <person name="Oshima A."/>
            <person name="Sasaki N."/>
            <person name="Aotsuka S."/>
            <person name="Yoshikawa Y."/>
            <person name="Matsunawa H."/>
            <person name="Ichihara T."/>
            <person name="Shiohata N."/>
            <person name="Sano S."/>
            <person name="Moriya S."/>
            <person name="Momiyama H."/>
            <person name="Satoh N."/>
            <person name="Takami S."/>
            <person name="Terashima Y."/>
            <person name="Suzuki O."/>
            <person name="Nakagawa S."/>
            <person name="Senoh A."/>
            <person name="Mizoguchi H."/>
            <person name="Goto Y."/>
            <person name="Shimizu F."/>
            <person name="Wakebe H."/>
            <person name="Hishigaki H."/>
            <person name="Watanabe T."/>
            <person name="Sugiyama A."/>
            <person name="Takemoto M."/>
            <person name="Kawakami B."/>
            <person name="Yamazaki M."/>
            <person name="Watanabe K."/>
            <person name="Kumagai A."/>
            <person name="Itakura S."/>
            <person name="Fukuzumi Y."/>
            <person name="Fujimori Y."/>
            <person name="Komiyama M."/>
            <person name="Tashiro H."/>
            <person name="Tanigami A."/>
            <person name="Fujiwara T."/>
            <person name="Ono T."/>
            <person name="Yamada K."/>
            <person name="Fujii Y."/>
            <person name="Ozaki K."/>
            <person name="Hirao M."/>
            <person name="Ohmori Y."/>
            <person name="Kawabata A."/>
            <person name="Hikiji T."/>
            <person name="Kobatake N."/>
            <person name="Inagaki H."/>
            <person name="Ikema Y."/>
            <person name="Okamoto S."/>
            <person name="Okitani R."/>
            <person name="Kawakami T."/>
            <person name="Noguchi S."/>
            <person name="Itoh T."/>
            <person name="Shigeta K."/>
            <person name="Senba T."/>
            <person name="Matsumura K."/>
            <person name="Nakajima Y."/>
            <person name="Mizuno T."/>
            <person name="Morinaga M."/>
            <person name="Sasaki M."/>
            <person name="Togashi T."/>
            <person name="Oyama M."/>
            <person name="Hata H."/>
            <person name="Watanabe M."/>
            <person name="Komatsu T."/>
            <person name="Mizushima-Sugano J."/>
            <person name="Satoh T."/>
            <person name="Shirai Y."/>
            <person name="Takahashi Y."/>
            <person name="Nakagawa K."/>
            <person name="Okumura K."/>
            <person name="Nagase T."/>
            <person name="Nomura N."/>
            <person name="Kikuchi H."/>
            <person name="Masuho Y."/>
            <person name="Yamashita R."/>
            <person name="Nakai K."/>
            <person name="Yada T."/>
            <person name="Nakamura Y."/>
            <person name="Ohara O."/>
            <person name="Isogai T."/>
            <person name="Sugano S."/>
        </authorList>
    </citation>
    <scope>NUCLEOTIDE SEQUENCE [LARGE SCALE MRNA] (ISOFORM TRKB-N-T1)</scope>
    <source>
        <tissue>Amygdala</tissue>
    </source>
</reference>
<reference key="7">
    <citation type="submission" date="2005-03" db="EMBL/GenBank/DDBJ databases">
        <title>Homo sapiens protein coding cDNA.</title>
        <authorList>
            <person name="Totoki Y."/>
            <person name="Toyoda A."/>
            <person name="Takeda T."/>
            <person name="Sakaki Y."/>
            <person name="Tanaka A."/>
            <person name="Yokoyama S."/>
            <person name="Ohara O."/>
            <person name="Nagase T."/>
            <person name="Kikuno R.F."/>
        </authorList>
    </citation>
    <scope>NUCLEOTIDE SEQUENCE [LARGE SCALE MRNA] (ISOFORM TRKB-T-TK)</scope>
    <source>
        <tissue>Brain</tissue>
    </source>
</reference>
<reference key="8">
    <citation type="journal article" date="2004" name="Nature">
        <title>DNA sequence and analysis of human chromosome 9.</title>
        <authorList>
            <person name="Humphray S.J."/>
            <person name="Oliver K."/>
            <person name="Hunt A.R."/>
            <person name="Plumb R.W."/>
            <person name="Loveland J.E."/>
            <person name="Howe K.L."/>
            <person name="Andrews T.D."/>
            <person name="Searle S."/>
            <person name="Hunt S.E."/>
            <person name="Scott C.E."/>
            <person name="Jones M.C."/>
            <person name="Ainscough R."/>
            <person name="Almeida J.P."/>
            <person name="Ambrose K.D."/>
            <person name="Ashwell R.I.S."/>
            <person name="Babbage A.K."/>
            <person name="Babbage S."/>
            <person name="Bagguley C.L."/>
            <person name="Bailey J."/>
            <person name="Banerjee R."/>
            <person name="Barker D.J."/>
            <person name="Barlow K.F."/>
            <person name="Bates K."/>
            <person name="Beasley H."/>
            <person name="Beasley O."/>
            <person name="Bird C.P."/>
            <person name="Bray-Allen S."/>
            <person name="Brown A.J."/>
            <person name="Brown J.Y."/>
            <person name="Burford D."/>
            <person name="Burrill W."/>
            <person name="Burton J."/>
            <person name="Carder C."/>
            <person name="Carter N.P."/>
            <person name="Chapman J.C."/>
            <person name="Chen Y."/>
            <person name="Clarke G."/>
            <person name="Clark S.Y."/>
            <person name="Clee C.M."/>
            <person name="Clegg S."/>
            <person name="Collier R.E."/>
            <person name="Corby N."/>
            <person name="Crosier M."/>
            <person name="Cummings A.T."/>
            <person name="Davies J."/>
            <person name="Dhami P."/>
            <person name="Dunn M."/>
            <person name="Dutta I."/>
            <person name="Dyer L.W."/>
            <person name="Earthrowl M.E."/>
            <person name="Faulkner L."/>
            <person name="Fleming C.J."/>
            <person name="Frankish A."/>
            <person name="Frankland J.A."/>
            <person name="French L."/>
            <person name="Fricker D.G."/>
            <person name="Garner P."/>
            <person name="Garnett J."/>
            <person name="Ghori J."/>
            <person name="Gilbert J.G.R."/>
            <person name="Glison C."/>
            <person name="Grafham D.V."/>
            <person name="Gribble S."/>
            <person name="Griffiths C."/>
            <person name="Griffiths-Jones S."/>
            <person name="Grocock R."/>
            <person name="Guy J."/>
            <person name="Hall R.E."/>
            <person name="Hammond S."/>
            <person name="Harley J.L."/>
            <person name="Harrison E.S.I."/>
            <person name="Hart E.A."/>
            <person name="Heath P.D."/>
            <person name="Henderson C.D."/>
            <person name="Hopkins B.L."/>
            <person name="Howard P.J."/>
            <person name="Howden P.J."/>
            <person name="Huckle E."/>
            <person name="Johnson C."/>
            <person name="Johnson D."/>
            <person name="Joy A.A."/>
            <person name="Kay M."/>
            <person name="Keenan S."/>
            <person name="Kershaw J.K."/>
            <person name="Kimberley A.M."/>
            <person name="King A."/>
            <person name="Knights A."/>
            <person name="Laird G.K."/>
            <person name="Langford C."/>
            <person name="Lawlor S."/>
            <person name="Leongamornlert D.A."/>
            <person name="Leversha M."/>
            <person name="Lloyd C."/>
            <person name="Lloyd D.M."/>
            <person name="Lovell J."/>
            <person name="Martin S."/>
            <person name="Mashreghi-Mohammadi M."/>
            <person name="Matthews L."/>
            <person name="McLaren S."/>
            <person name="McLay K.E."/>
            <person name="McMurray A."/>
            <person name="Milne S."/>
            <person name="Nickerson T."/>
            <person name="Nisbett J."/>
            <person name="Nordsiek G."/>
            <person name="Pearce A.V."/>
            <person name="Peck A.I."/>
            <person name="Porter K.M."/>
            <person name="Pandian R."/>
            <person name="Pelan S."/>
            <person name="Phillimore B."/>
            <person name="Povey S."/>
            <person name="Ramsey Y."/>
            <person name="Rand V."/>
            <person name="Scharfe M."/>
            <person name="Sehra H.K."/>
            <person name="Shownkeen R."/>
            <person name="Sims S.K."/>
            <person name="Skuce C.D."/>
            <person name="Smith M."/>
            <person name="Steward C.A."/>
            <person name="Swarbreck D."/>
            <person name="Sycamore N."/>
            <person name="Tester J."/>
            <person name="Thorpe A."/>
            <person name="Tracey A."/>
            <person name="Tromans A."/>
            <person name="Thomas D.W."/>
            <person name="Wall M."/>
            <person name="Wallis J.M."/>
            <person name="West A.P."/>
            <person name="Whitehead S.L."/>
            <person name="Willey D.L."/>
            <person name="Williams S.A."/>
            <person name="Wilming L."/>
            <person name="Wray P.W."/>
            <person name="Young L."/>
            <person name="Ashurst J.L."/>
            <person name="Coulson A."/>
            <person name="Blocker H."/>
            <person name="Durbin R.M."/>
            <person name="Sulston J.E."/>
            <person name="Hubbard T."/>
            <person name="Jackson M.J."/>
            <person name="Bentley D.R."/>
            <person name="Beck S."/>
            <person name="Rogers J."/>
            <person name="Dunham I."/>
        </authorList>
    </citation>
    <scope>NUCLEOTIDE SEQUENCE [LARGE SCALE GENOMIC DNA]</scope>
</reference>
<reference key="9">
    <citation type="submission" date="2005-07" db="EMBL/GenBank/DDBJ databases">
        <authorList>
            <person name="Mural R.J."/>
            <person name="Istrail S."/>
            <person name="Sutton G.G."/>
            <person name="Florea L."/>
            <person name="Halpern A.L."/>
            <person name="Mobarry C.M."/>
            <person name="Lippert R."/>
            <person name="Walenz B."/>
            <person name="Shatkay H."/>
            <person name="Dew I."/>
            <person name="Miller J.R."/>
            <person name="Flanigan M.J."/>
            <person name="Edwards N.J."/>
            <person name="Bolanos R."/>
            <person name="Fasulo D."/>
            <person name="Halldorsson B.V."/>
            <person name="Hannenhalli S."/>
            <person name="Turner R."/>
            <person name="Yooseph S."/>
            <person name="Lu F."/>
            <person name="Nusskern D.R."/>
            <person name="Shue B.C."/>
            <person name="Zheng X.H."/>
            <person name="Zhong F."/>
            <person name="Delcher A.L."/>
            <person name="Huson D.H."/>
            <person name="Kravitz S.A."/>
            <person name="Mouchard L."/>
            <person name="Reinert K."/>
            <person name="Remington K.A."/>
            <person name="Clark A.G."/>
            <person name="Waterman M.S."/>
            <person name="Eichler E.E."/>
            <person name="Adams M.D."/>
            <person name="Hunkapiller M.W."/>
            <person name="Myers E.W."/>
            <person name="Venter J.C."/>
        </authorList>
    </citation>
    <scope>NUCLEOTIDE SEQUENCE [LARGE SCALE GENOMIC DNA]</scope>
</reference>
<reference key="10">
    <citation type="journal article" date="2004" name="Genome Res.">
        <title>The status, quality, and expansion of the NIH full-length cDNA project: the Mammalian Gene Collection (MGC).</title>
        <authorList>
            <consortium name="The MGC Project Team"/>
        </authorList>
    </citation>
    <scope>NUCLEOTIDE SEQUENCE [LARGE SCALE MRNA] (ISOFORM TRKB-T1)</scope>
    <source>
        <tissue>Brain</tissue>
    </source>
</reference>
<reference key="11">
    <citation type="journal article" date="1995" name="Arch. Biochem. Biophys.">
        <title>Extracellular domain of neurotrophin receptor trkB: disulfide structure, N-glycosylation sites, and ligand binding.</title>
        <authorList>
            <person name="Haniu M."/>
            <person name="Talvenheimo J."/>
            <person name="Le J."/>
            <person name="Katta V."/>
            <person name="Welcher A."/>
            <person name="Rohde M.F."/>
        </authorList>
    </citation>
    <scope>FUNCTION</scope>
    <scope>DISULFIDE BONDS</scope>
    <scope>GLYCOSYLATION AT ASN-67; ASN-95; ASN-121; ASN-178; ASN-205; ASN-241; ASN-254; ASN-280; ASN-338 AND ASN-412</scope>
</reference>
<reference key="12">
    <citation type="journal article" date="1999" name="J. Biol. Chem.">
        <title>The signaling adapter FRS-2 competes with Shc for binding to the nerve growth factor receptor TrkA. A model for discriminating proliferation and differentiation.</title>
        <authorList>
            <person name="Meakin S.O."/>
            <person name="MacDonald J.I.S."/>
            <person name="Gryz E.A."/>
            <person name="Kubu C.J."/>
            <person name="Verdi J.M."/>
        </authorList>
    </citation>
    <scope>INTERACTION WITH FRS2</scope>
</reference>
<reference key="13">
    <citation type="journal article" date="2005" name="J. Proteome Res.">
        <title>Human plasma N-glycoproteome analysis by immunoaffinity subtraction, hydrazide chemistry, and mass spectrometry.</title>
        <authorList>
            <person name="Liu T."/>
            <person name="Qian W.-J."/>
            <person name="Gritsenko M.A."/>
            <person name="Camp D.G. II"/>
            <person name="Monroe M.E."/>
            <person name="Moore R.J."/>
            <person name="Smith R.D."/>
        </authorList>
    </citation>
    <scope>GLYCOSYLATION [LARGE SCALE ANALYSIS] AT ASN-67; ASN-121 AND ASN-254</scope>
    <source>
        <tissue>Plasma</tissue>
    </source>
</reference>
<reference key="14">
    <citation type="journal article" date="2010" name="J. Neurochem.">
        <title>Human TrkB gene: novel alternative transcripts, protein isoforms and expression pattern in the prefrontal cerebral cortex during postnatal development.</title>
        <authorList>
            <person name="Luberg K."/>
            <person name="Wong J."/>
            <person name="Weickert C.S."/>
            <person name="Timmusk T."/>
        </authorList>
    </citation>
    <scope>ALTERNATIVE SPLICING (ISOFORMS TRKB-T-TK AND TRKB-N-T1)</scope>
</reference>
<reference evidence="33" key="15">
    <citation type="journal article" date="1999" name="J. Mol. Biol.">
        <title>Crystal structures of the neurotrophin-binding domain of TrkA, TrkB and TrkC.</title>
        <authorList>
            <person name="Ultsch M.H."/>
            <person name="Wiesmann C."/>
            <person name="Simmons L.C."/>
            <person name="Henrich J."/>
            <person name="Yang M."/>
            <person name="Reilly D."/>
            <person name="Bass S.H."/>
            <person name="de Vos A.M."/>
        </authorList>
    </citation>
    <scope>X-RAY CRYSTALLOGRAPHY (2.10 ANGSTROMS) OF 283-385</scope>
    <scope>DISULFIDE BONDS</scope>
</reference>
<reference evidence="32" key="16">
    <citation type="journal article" date="2001" name="Structure">
        <title>Specificity in Trk receptor:neurotrophin interactions: the crystal structure of TrkB-d5 in complex with neurotrophin-4/5.</title>
        <authorList>
            <person name="Banfield M.J."/>
            <person name="Naylor R.L."/>
            <person name="Robertson A.G."/>
            <person name="Allen S.J."/>
            <person name="Dawbarn D."/>
            <person name="Brady R.L."/>
        </authorList>
    </citation>
    <scope>X-RAY CRYSTALLOGRAPHY (2.70 ANGSTROMS) OF 284-383 IN COMPLEX WITH NTF4</scope>
    <scope>DISULFIDE BONDS</scope>
</reference>
<reference key="17">
    <citation type="journal article" date="2022" name="Nat. Commun.">
        <title>SLITRK2 variants associated with neurodevelopmental disorders impair excitatory synaptic function and cognition in mice.</title>
        <authorList>
            <person name="El Chehadeh S."/>
            <person name="Han K.A."/>
            <person name="Kim D."/>
            <person name="Jang G."/>
            <person name="Bakhtiari S."/>
            <person name="Lim D."/>
            <person name="Kim H.Y."/>
            <person name="Kim J."/>
            <person name="Kim H."/>
            <person name="Wynn J."/>
            <person name="Chung W.K."/>
            <person name="Vitiello G."/>
            <person name="Cutcutache I."/>
            <person name="Page M."/>
            <person name="Gecz J."/>
            <person name="Harper K."/>
            <person name="Han A.R."/>
            <person name="Kim H.M."/>
            <person name="Wessels M."/>
            <person name="Bayat A."/>
            <person name="Jaen A.F."/>
            <person name="Selicorni A."/>
            <person name="Maitz S."/>
            <person name="de Brouwer A.P.M."/>
            <person name="Silfhout A.V."/>
            <person name="Armstrong M."/>
            <person name="Symonds J."/>
            <person name="Kuery S."/>
            <person name="Isidor B."/>
            <person name="Cogne B."/>
            <person name="Nizon M."/>
            <person name="Feger C."/>
            <person name="Muller J."/>
            <person name="Torti E."/>
            <person name="Grange D.K."/>
            <person name="Willems M."/>
            <person name="Kruer M.C."/>
            <person name="Ko J."/>
            <person name="Piton A."/>
            <person name="Um J.W."/>
        </authorList>
    </citation>
    <scope>INTERACTION WITH SLITRK2</scope>
</reference>
<reference key="18">
    <citation type="journal article" date="2004" name="Nat. Neurosci.">
        <title>A de novo mutation affecting human TrkB associated with severe obesity and developmental delay.</title>
        <authorList>
            <person name="Yeo G.S."/>
            <person name="Connie Hung C.C."/>
            <person name="Rochford J."/>
            <person name="Keogh J."/>
            <person name="Gray J."/>
            <person name="Sivaramakrishnan S."/>
            <person name="O'Rahilly S."/>
            <person name="Farooqi I.S."/>
        </authorList>
    </citation>
    <scope>VARIANT OBHD CYS-706</scope>
    <scope>CHARACTERIZATION OF VARIANT OBHD CYS-706</scope>
    <scope>FUNCTION AS A BDNF-ACTIVATED RECEPTOR</scope>
    <scope>CATALYTIC ACTIVITY</scope>
    <scope>PHOSPHORYLATION</scope>
    <scope>SUBCELLULAR LOCATION</scope>
</reference>
<reference key="19">
    <citation type="journal article" date="2007" name="Nature">
        <title>Patterns of somatic mutation in human cancer genomes.</title>
        <authorList>
            <person name="Greenman C."/>
            <person name="Stephens P."/>
            <person name="Smith R."/>
            <person name="Dalgliesh G.L."/>
            <person name="Hunter C."/>
            <person name="Bignell G."/>
            <person name="Davies H."/>
            <person name="Teague J."/>
            <person name="Butler A."/>
            <person name="Stevens C."/>
            <person name="Edkins S."/>
            <person name="O'Meara S."/>
            <person name="Vastrik I."/>
            <person name="Schmidt E.E."/>
            <person name="Avis T."/>
            <person name="Barthorpe S."/>
            <person name="Bhamra G."/>
            <person name="Buck G."/>
            <person name="Choudhury B."/>
            <person name="Clements J."/>
            <person name="Cole J."/>
            <person name="Dicks E."/>
            <person name="Forbes S."/>
            <person name="Gray K."/>
            <person name="Halliday K."/>
            <person name="Harrison R."/>
            <person name="Hills K."/>
            <person name="Hinton J."/>
            <person name="Jenkinson A."/>
            <person name="Jones D."/>
            <person name="Menzies A."/>
            <person name="Mironenko T."/>
            <person name="Perry J."/>
            <person name="Raine K."/>
            <person name="Richardson D."/>
            <person name="Shepherd R."/>
            <person name="Small A."/>
            <person name="Tofts C."/>
            <person name="Varian J."/>
            <person name="Webb T."/>
            <person name="West S."/>
            <person name="Widaa S."/>
            <person name="Yates A."/>
            <person name="Cahill D.P."/>
            <person name="Louis D.N."/>
            <person name="Goldstraw P."/>
            <person name="Nicholson A.G."/>
            <person name="Brasseur F."/>
            <person name="Looijenga L."/>
            <person name="Weber B.L."/>
            <person name="Chiew Y.-E."/>
            <person name="DeFazio A."/>
            <person name="Greaves M.F."/>
            <person name="Green A.R."/>
            <person name="Campbell P."/>
            <person name="Birney E."/>
            <person name="Easton D.F."/>
            <person name="Chenevix-Trench G."/>
            <person name="Tan M.-H."/>
            <person name="Khoo S.K."/>
            <person name="Teh B.T."/>
            <person name="Yuen S.T."/>
            <person name="Leung S.Y."/>
            <person name="Wooster R."/>
            <person name="Futreal P.A."/>
            <person name="Stratton M.R."/>
        </authorList>
    </citation>
    <scope>VARIANT [LARGE SCALE ANALYSIS] PHE-138</scope>
</reference>
<reference key="20">
    <citation type="journal article" date="2008" name="Hum. Mutat.">
        <title>Frequent mutations in the neurotrophic tyrosine receptor kinase gene family in large cell neuroendocrine carcinoma of the lung.</title>
        <authorList>
            <person name="Marchetti A."/>
            <person name="Felicioni L."/>
            <person name="Pelosi G."/>
            <person name="Del Grammastro M."/>
            <person name="Fumagalli C."/>
            <person name="Sciarrotta M."/>
            <person name="Malatesta S."/>
            <person name="Chella A."/>
            <person name="Barassi F."/>
            <person name="Mucilli F."/>
            <person name="Camplese P."/>
            <person name="D'Antuono T."/>
            <person name="Sacco R."/>
            <person name="Buttitta F."/>
        </authorList>
    </citation>
    <scope>VARIANTS ILE-697; GLY-699 AND CYS-718</scope>
</reference>
<reference key="21">
    <citation type="journal article" date="2017" name="J. Med. Genet.">
        <title>Diagnostic value of exome and whole genome sequencing in craniosynostosis.</title>
        <authorList>
            <person name="Miller K.A."/>
            <person name="Twigg S.R."/>
            <person name="McGowan S.J."/>
            <person name="Phipps J.M."/>
            <person name="Fenwick A.L."/>
            <person name="Johnson D."/>
            <person name="Wall S.A."/>
            <person name="Noons P."/>
            <person name="Rees K.E."/>
            <person name="Tidey E.A."/>
            <person name="Craft J."/>
            <person name="Taylor J."/>
            <person name="Taylor J.C."/>
            <person name="Goos J.A."/>
            <person name="Swagemakers S.M."/>
            <person name="Mathijssen I.M."/>
            <person name="van der Spek P.J."/>
            <person name="Lord H."/>
            <person name="Lester T."/>
            <person name="Abid N."/>
            <person name="Cilliers D."/>
            <person name="Hurst J.A."/>
            <person name="Morton J.E."/>
            <person name="Sweeney E."/>
            <person name="Weber A."/>
            <person name="Wilson L.C."/>
            <person name="Wilkie A.O."/>
        </authorList>
    </citation>
    <scope>VARIANT OBHD 444-GLY--GLY-822 DEL</scope>
</reference>
<reference key="22">
    <citation type="journal article" date="2017" name="Am. J. Hum. Genet.">
        <title>High rate of recurrent de novo mutations in developmental and epileptic encephalopathies.</title>
        <authorList>
            <consortium name="Deciphering Developmental Disorders Study"/>
            <person name="Hamdan F.F."/>
            <person name="Myers C.T."/>
            <person name="Cossette P."/>
            <person name="Lemay P."/>
            <person name="Spiegelman D."/>
            <person name="Laporte A.D."/>
            <person name="Nassif C."/>
            <person name="Diallo O."/>
            <person name="Monlong J."/>
            <person name="Cadieux-Dion M."/>
            <person name="Dobrzeniecka S."/>
            <person name="Meloche C."/>
            <person name="Retterer K."/>
            <person name="Cho M.T."/>
            <person name="Rosenfeld J.A."/>
            <person name="Bi W."/>
            <person name="Massicotte C."/>
            <person name="Miguet M."/>
            <person name="Brunga L."/>
            <person name="Regan B.M."/>
            <person name="Mo K."/>
            <person name="Tam C."/>
            <person name="Schneider A."/>
            <person name="Hollingsworth G."/>
            <person name="FitzPatrick D.R."/>
            <person name="Donaldson A."/>
            <person name="Canham N."/>
            <person name="Blair E."/>
            <person name="Kerr B."/>
            <person name="Fry A.E."/>
            <person name="Thomas R.H."/>
            <person name="Shelagh J."/>
            <person name="Hurst J.A."/>
            <person name="Brittain H."/>
            <person name="Blyth M."/>
            <person name="Lebel R.R."/>
            <person name="Gerkes E.H."/>
            <person name="Davis-Keppen L."/>
            <person name="Stein Q."/>
            <person name="Chung W.K."/>
            <person name="Dorison S.J."/>
            <person name="Benke P.J."/>
            <person name="Fassi E."/>
            <person name="Corsten-Janssen N."/>
            <person name="Kamsteeg E.J."/>
            <person name="Mau-Them F.T."/>
            <person name="Bruel A.L."/>
            <person name="Verloes A."/>
            <person name="Ounap K."/>
            <person name="Wojcik M.H."/>
            <person name="Albert D.V.F."/>
            <person name="Venkateswaran S."/>
            <person name="Ware T."/>
            <person name="Jones D."/>
            <person name="Liu Y.C."/>
            <person name="Mohammad S.S."/>
            <person name="Bizargity P."/>
            <person name="Bacino C.A."/>
            <person name="Leuzzi V."/>
            <person name="Martinelli S."/>
            <person name="Dallapiccola B."/>
            <person name="Tartaglia M."/>
            <person name="Blumkin L."/>
            <person name="Wierenga K.J."/>
            <person name="Purcarin G."/>
            <person name="O'Byrne J.J."/>
            <person name="Stockler S."/>
            <person name="Lehman A."/>
            <person name="Keren B."/>
            <person name="Nougues M.C."/>
            <person name="Mignot C."/>
            <person name="Auvin S."/>
            <person name="Nava C."/>
            <person name="Hiatt S.M."/>
            <person name="Bebin M."/>
            <person name="Shao Y."/>
            <person name="Scaglia F."/>
            <person name="Lalani S.R."/>
            <person name="Frye R.E."/>
            <person name="Jarjour I.T."/>
            <person name="Jacques S."/>
            <person name="Boucher R.M."/>
            <person name="Riou E."/>
            <person name="Srour M."/>
            <person name="Carmant L."/>
            <person name="Lortie A."/>
            <person name="Major P."/>
            <person name="Diadori P."/>
            <person name="Dubeau F."/>
            <person name="D'Anjou G."/>
            <person name="Bourque G."/>
            <person name="Berkovic S.F."/>
            <person name="Sadleir L.G."/>
            <person name="Campeau P.M."/>
            <person name="Kibar Z."/>
            <person name="Lafreniere R.G."/>
            <person name="Girard S.L."/>
            <person name="Mercimek-Mahmutoglu S."/>
            <person name="Boelman C."/>
            <person name="Rouleau G.A."/>
            <person name="Scheffer I.E."/>
            <person name="Mefford H.C."/>
            <person name="Andrade D.M."/>
            <person name="Rossignol E."/>
            <person name="Minassian B.A."/>
            <person name="Michaud J.L."/>
        </authorList>
    </citation>
    <scope>VARIANT DEE58 CYS-434</scope>
    <scope>VARIANT OBHD ILE-704</scope>
    <scope>INVOLVEMENT IN DEE58</scope>
</reference>
<proteinExistence type="evidence at protein level"/>
<dbReference type="EC" id="2.7.10.1" evidence="14"/>
<dbReference type="EMBL" id="U12140">
    <property type="protein sequence ID" value="AAC51371.1"/>
    <property type="molecule type" value="mRNA"/>
</dbReference>
<dbReference type="EMBL" id="S76473">
    <property type="protein sequence ID" value="AAB33109.1"/>
    <property type="molecule type" value="mRNA"/>
</dbReference>
<dbReference type="EMBL" id="S76474">
    <property type="protein sequence ID" value="AAB33110.1"/>
    <property type="molecule type" value="mRNA"/>
</dbReference>
<dbReference type="EMBL" id="X75958">
    <property type="protein sequence ID" value="CAA53571.1"/>
    <property type="molecule type" value="mRNA"/>
</dbReference>
<dbReference type="EMBL" id="AF410899">
    <property type="protein sequence ID" value="AAL67965.1"/>
    <property type="molecule type" value="mRNA"/>
</dbReference>
<dbReference type="EMBL" id="AF410900">
    <property type="protein sequence ID" value="AAL67966.1"/>
    <property type="molecule type" value="mRNA"/>
</dbReference>
<dbReference type="EMBL" id="AF410901">
    <property type="protein sequence ID" value="AAL67967.1"/>
    <property type="molecule type" value="mRNA"/>
</dbReference>
<dbReference type="EMBL" id="AF508964">
    <property type="protein sequence ID" value="AAM77876.1"/>
    <property type="molecule type" value="mRNA"/>
</dbReference>
<dbReference type="EMBL" id="AB209118">
    <property type="protein sequence ID" value="BAD92355.1"/>
    <property type="molecule type" value="mRNA"/>
</dbReference>
<dbReference type="EMBL" id="AK294285">
    <property type="protein sequence ID" value="BAG57570.1"/>
    <property type="molecule type" value="mRNA"/>
</dbReference>
<dbReference type="EMBL" id="AL390777">
    <property type="status" value="NOT_ANNOTATED_CDS"/>
    <property type="molecule type" value="Genomic_DNA"/>
</dbReference>
<dbReference type="EMBL" id="AL445532">
    <property type="status" value="NOT_ANNOTATED_CDS"/>
    <property type="molecule type" value="Genomic_DNA"/>
</dbReference>
<dbReference type="EMBL" id="AL596132">
    <property type="status" value="NOT_ANNOTATED_CDS"/>
    <property type="molecule type" value="Genomic_DNA"/>
</dbReference>
<dbReference type="EMBL" id="CH471089">
    <property type="protein sequence ID" value="EAW62688.1"/>
    <property type="molecule type" value="Genomic_DNA"/>
</dbReference>
<dbReference type="EMBL" id="BC031835">
    <property type="protein sequence ID" value="AAH31835.1"/>
    <property type="molecule type" value="mRNA"/>
</dbReference>
<dbReference type="CCDS" id="CCDS35050.1">
    <molecule id="Q16620-1"/>
</dbReference>
<dbReference type="CCDS" id="CCDS35051.1">
    <molecule id="Q16620-5"/>
</dbReference>
<dbReference type="CCDS" id="CCDS35052.1">
    <molecule id="Q16620-3"/>
</dbReference>
<dbReference type="CCDS" id="CCDS35053.1">
    <molecule id="Q16620-2"/>
</dbReference>
<dbReference type="CCDS" id="CCDS6671.1">
    <molecule id="Q16620-4"/>
</dbReference>
<dbReference type="CCDS" id="CCDS94429.1">
    <molecule id="Q16620-7"/>
</dbReference>
<dbReference type="PIR" id="A56853">
    <property type="entry name" value="A56853"/>
</dbReference>
<dbReference type="PIR" id="I73631">
    <property type="entry name" value="I73631"/>
</dbReference>
<dbReference type="RefSeq" id="NP_001007098.1">
    <molecule id="Q16620-2"/>
    <property type="nucleotide sequence ID" value="NM_001007097.3"/>
</dbReference>
<dbReference type="RefSeq" id="NP_001018074.1">
    <molecule id="Q16620-1"/>
    <property type="nucleotide sequence ID" value="NM_001018064.3"/>
</dbReference>
<dbReference type="RefSeq" id="NP_001018075.1">
    <molecule id="Q16620-5"/>
    <property type="nucleotide sequence ID" value="NM_001018065.2"/>
</dbReference>
<dbReference type="RefSeq" id="NP_001018076.1">
    <molecule id="Q16620-3"/>
    <property type="nucleotide sequence ID" value="NM_001018066.3"/>
</dbReference>
<dbReference type="RefSeq" id="NP_001356461.1">
    <molecule id="Q16620-1"/>
    <property type="nucleotide sequence ID" value="NM_001369532.1"/>
</dbReference>
<dbReference type="RefSeq" id="NP_001356462.1">
    <molecule id="Q16620-1"/>
    <property type="nucleotide sequence ID" value="NM_001369533.1"/>
</dbReference>
<dbReference type="RefSeq" id="NP_001356466.1">
    <molecule id="Q16620-5"/>
    <property type="nucleotide sequence ID" value="NM_001369537.1"/>
</dbReference>
<dbReference type="RefSeq" id="NP_001356467.1">
    <molecule id="Q16620-3"/>
    <property type="nucleotide sequence ID" value="NM_001369538.1"/>
</dbReference>
<dbReference type="RefSeq" id="NP_001356468.1">
    <molecule id="Q16620-2"/>
    <property type="nucleotide sequence ID" value="NM_001369539.1"/>
</dbReference>
<dbReference type="RefSeq" id="NP_001356469.1">
    <molecule id="Q16620-2"/>
    <property type="nucleotide sequence ID" value="NM_001369540.1"/>
</dbReference>
<dbReference type="RefSeq" id="NP_001356470.1">
    <molecule id="Q16620-2"/>
    <property type="nucleotide sequence ID" value="NM_001369541.1"/>
</dbReference>
<dbReference type="RefSeq" id="NP_001356471.1">
    <molecule id="Q16620-2"/>
    <property type="nucleotide sequence ID" value="NM_001369542.1"/>
</dbReference>
<dbReference type="RefSeq" id="NP_001356472.1">
    <molecule id="Q16620-2"/>
    <property type="nucleotide sequence ID" value="NM_001369543.1"/>
</dbReference>
<dbReference type="RefSeq" id="NP_001356473.1">
    <molecule id="Q16620-2"/>
    <property type="nucleotide sequence ID" value="NM_001369544.1"/>
</dbReference>
<dbReference type="RefSeq" id="NP_001356474.1">
    <molecule id="Q16620-2"/>
    <property type="nucleotide sequence ID" value="NM_001369545.1"/>
</dbReference>
<dbReference type="RefSeq" id="NP_001356477.1">
    <molecule id="Q16620-2"/>
    <property type="nucleotide sequence ID" value="NM_001369548.1"/>
</dbReference>
<dbReference type="RefSeq" id="NP_001356478.1">
    <molecule id="Q16620-2"/>
    <property type="nucleotide sequence ID" value="NM_001369549.1"/>
</dbReference>
<dbReference type="RefSeq" id="NP_001356479.1">
    <molecule id="Q16620-7"/>
    <property type="nucleotide sequence ID" value="NM_001369550.1"/>
</dbReference>
<dbReference type="RefSeq" id="NP_001356480.1">
    <molecule id="Q16620-7"/>
    <property type="nucleotide sequence ID" value="NM_001369551.1"/>
</dbReference>
<dbReference type="RefSeq" id="NP_001356481.1">
    <molecule id="Q16620-7"/>
    <property type="nucleotide sequence ID" value="NM_001369552.1"/>
</dbReference>
<dbReference type="RefSeq" id="NP_006171.2">
    <molecule id="Q16620-4"/>
    <property type="nucleotide sequence ID" value="NM_006180.4"/>
</dbReference>
<dbReference type="RefSeq" id="XP_005252058.1">
    <molecule id="Q16620-4"/>
    <property type="nucleotide sequence ID" value="XM_005252001.4"/>
</dbReference>
<dbReference type="RefSeq" id="XP_005252060.1">
    <molecule id="Q16620-4"/>
    <property type="nucleotide sequence ID" value="XM_005252003.4"/>
</dbReference>
<dbReference type="RefSeq" id="XP_005252061.1">
    <molecule id="Q16620-4"/>
    <property type="nucleotide sequence ID" value="XM_005252004.3"/>
</dbReference>
<dbReference type="RefSeq" id="XP_005252063.1">
    <property type="nucleotide sequence ID" value="XM_005252006.3"/>
</dbReference>
<dbReference type="RefSeq" id="XP_005252064.1">
    <property type="nucleotide sequence ID" value="XM_005252007.3"/>
</dbReference>
<dbReference type="RefSeq" id="XP_011517020.1">
    <molecule id="Q16620-1"/>
    <property type="nucleotide sequence ID" value="XM_011518718.4"/>
</dbReference>
<dbReference type="RefSeq" id="XP_011517022.1">
    <property type="nucleotide sequence ID" value="XM_011518720.2"/>
</dbReference>
<dbReference type="RefSeq" id="XP_016870240.1">
    <molecule id="Q16620-4"/>
    <property type="nucleotide sequence ID" value="XM_017014751.3"/>
</dbReference>
<dbReference type="RefSeq" id="XP_016870241.1">
    <molecule id="Q16620-1"/>
    <property type="nucleotide sequence ID" value="XM_017014752.2"/>
</dbReference>
<dbReference type="RefSeq" id="XP_016870242.1">
    <molecule id="Q16620-1"/>
    <property type="nucleotide sequence ID" value="XM_017014753.3"/>
</dbReference>
<dbReference type="RefSeq" id="XP_016870243.1">
    <property type="nucleotide sequence ID" value="XM_017014754.1"/>
</dbReference>
<dbReference type="RefSeq" id="XP_016870244.1">
    <molecule id="Q16620-5"/>
    <property type="nucleotide sequence ID" value="XM_017014755.1"/>
</dbReference>
<dbReference type="RefSeq" id="XP_016870245.1">
    <property type="nucleotide sequence ID" value="XM_017014756.1"/>
</dbReference>
<dbReference type="RefSeq" id="XP_016870246.1">
    <property type="nucleotide sequence ID" value="XM_017014757.1"/>
</dbReference>
<dbReference type="RefSeq" id="XP_016870247.1">
    <property type="nucleotide sequence ID" value="XM_017014758.1"/>
</dbReference>
<dbReference type="RefSeq" id="XP_016870248.1">
    <property type="nucleotide sequence ID" value="XM_017014759.1"/>
</dbReference>
<dbReference type="RefSeq" id="XP_016870249.1">
    <molecule id="Q16620-2"/>
    <property type="nucleotide sequence ID" value="XM_017014760.3"/>
</dbReference>
<dbReference type="RefSeq" id="XP_016870250.1">
    <property type="nucleotide sequence ID" value="XM_017014761.1"/>
</dbReference>
<dbReference type="RefSeq" id="XP_047279388.1">
    <molecule id="Q16620-4"/>
    <property type="nucleotide sequence ID" value="XM_047423432.1"/>
</dbReference>
<dbReference type="RefSeq" id="XP_047279389.1">
    <molecule id="Q16620-4"/>
    <property type="nucleotide sequence ID" value="XM_047423433.1"/>
</dbReference>
<dbReference type="RefSeq" id="XP_054218993.1">
    <molecule id="Q16620-4"/>
    <property type="nucleotide sequence ID" value="XM_054363018.1"/>
</dbReference>
<dbReference type="RefSeq" id="XP_054218994.1">
    <molecule id="Q16620-4"/>
    <property type="nucleotide sequence ID" value="XM_054363019.1"/>
</dbReference>
<dbReference type="RefSeq" id="XP_054218995.1">
    <molecule id="Q16620-4"/>
    <property type="nucleotide sequence ID" value="XM_054363020.1"/>
</dbReference>
<dbReference type="RefSeq" id="XP_054218996.1">
    <molecule id="Q16620-4"/>
    <property type="nucleotide sequence ID" value="XM_054363021.1"/>
</dbReference>
<dbReference type="RefSeq" id="XP_054218997.1">
    <molecule id="Q16620-4"/>
    <property type="nucleotide sequence ID" value="XM_054363022.1"/>
</dbReference>
<dbReference type="RefSeq" id="XP_054218998.1">
    <molecule id="Q16620-4"/>
    <property type="nucleotide sequence ID" value="XM_054363023.1"/>
</dbReference>
<dbReference type="RefSeq" id="XP_054218999.1">
    <molecule id="Q16620-1"/>
    <property type="nucleotide sequence ID" value="XM_054363024.1"/>
</dbReference>
<dbReference type="RefSeq" id="XP_054219000.1">
    <molecule id="Q16620-1"/>
    <property type="nucleotide sequence ID" value="XM_054363025.1"/>
</dbReference>
<dbReference type="RefSeq" id="XP_054219001.1">
    <molecule id="Q16620-1"/>
    <property type="nucleotide sequence ID" value="XM_054363026.1"/>
</dbReference>
<dbReference type="RefSeq" id="XP_054219002.1">
    <molecule id="Q16620-5"/>
    <property type="nucleotide sequence ID" value="XM_054363027.1"/>
</dbReference>
<dbReference type="RefSeq" id="XP_054219003.1">
    <molecule id="Q16620-2"/>
    <property type="nucleotide sequence ID" value="XM_054363028.1"/>
</dbReference>
<dbReference type="PDB" id="1HCF">
    <property type="method" value="X-ray"/>
    <property type="resolution" value="2.70 A"/>
    <property type="chains" value="X/Y=286-383"/>
</dbReference>
<dbReference type="PDB" id="1WWB">
    <property type="method" value="X-ray"/>
    <property type="resolution" value="2.10 A"/>
    <property type="chains" value="X=283-385"/>
</dbReference>
<dbReference type="PDB" id="2MFQ">
    <property type="method" value="NMR"/>
    <property type="chains" value="B=497-519"/>
</dbReference>
<dbReference type="PDB" id="4ASZ">
    <property type="method" value="X-ray"/>
    <property type="resolution" value="1.70 A"/>
    <property type="chains" value="A=527-822"/>
</dbReference>
<dbReference type="PDB" id="4AT3">
    <property type="method" value="X-ray"/>
    <property type="resolution" value="1.77 A"/>
    <property type="chains" value="A=527-822"/>
</dbReference>
<dbReference type="PDB" id="4AT4">
    <property type="method" value="X-ray"/>
    <property type="resolution" value="2.36 A"/>
    <property type="chains" value="A=527-822"/>
</dbReference>
<dbReference type="PDB" id="4AT5">
    <property type="method" value="X-ray"/>
    <property type="resolution" value="1.71 A"/>
    <property type="chains" value="A=527-822"/>
</dbReference>
<dbReference type="PDB" id="5MO9">
    <property type="method" value="X-ray"/>
    <property type="resolution" value="2.59 A"/>
    <property type="chains" value="X=278-426"/>
</dbReference>
<dbReference type="PDB" id="8OYD">
    <property type="method" value="NMR"/>
    <property type="chains" value="A/B=422-466"/>
</dbReference>
<dbReference type="PDBsum" id="1HCF"/>
<dbReference type="PDBsum" id="1WWB"/>
<dbReference type="PDBsum" id="2MFQ"/>
<dbReference type="PDBsum" id="4ASZ"/>
<dbReference type="PDBsum" id="4AT3"/>
<dbReference type="PDBsum" id="4AT4"/>
<dbReference type="PDBsum" id="4AT5"/>
<dbReference type="PDBsum" id="5MO9"/>
<dbReference type="PDBsum" id="8OYD"/>
<dbReference type="SMR" id="Q16620"/>
<dbReference type="BioGRID" id="110970">
    <property type="interactions" value="132"/>
</dbReference>
<dbReference type="DIP" id="DIP-5720N"/>
<dbReference type="FunCoup" id="Q16620">
    <property type="interactions" value="1218"/>
</dbReference>
<dbReference type="IntAct" id="Q16620">
    <property type="interactions" value="109"/>
</dbReference>
<dbReference type="MINT" id="Q16620"/>
<dbReference type="STRING" id="9606.ENSP00000277120"/>
<dbReference type="BindingDB" id="Q16620"/>
<dbReference type="ChEMBL" id="CHEMBL4898"/>
<dbReference type="DrugBank" id="DB00321">
    <property type="generic name" value="Amitriptyline"/>
</dbReference>
<dbReference type="DrugBank" id="DB11986">
    <property type="generic name" value="Entrectinib"/>
</dbReference>
<dbReference type="DrugBank" id="DB11823">
    <property type="generic name" value="Esketamine"/>
</dbReference>
<dbReference type="DrugBank" id="DB12010">
    <property type="generic name" value="Fostamatinib"/>
</dbReference>
<dbReference type="DrugBank" id="DB16056">
    <property type="generic name" value="GZ-389988"/>
</dbReference>
<dbReference type="DrugBank" id="DB14723">
    <property type="generic name" value="Larotrectinib"/>
</dbReference>
<dbReference type="DrugBank" id="DB16826">
    <property type="generic name" value="Repotrectinib"/>
</dbReference>
<dbReference type="DrugCentral" id="Q16620"/>
<dbReference type="GuidetoPHARMACOLOGY" id="1818"/>
<dbReference type="TCDB" id="8.A.23.1.38">
    <property type="family name" value="the basigin (basigin) family"/>
</dbReference>
<dbReference type="GlyConnect" id="1029">
    <property type="glycosylation" value="12 N-Linked glycans (7 sites)"/>
</dbReference>
<dbReference type="GlyCosmos" id="Q16620">
    <property type="glycosylation" value="13 sites, 14 glycans"/>
</dbReference>
<dbReference type="GlyGen" id="Q16620">
    <property type="glycosylation" value="13 sites, 21 N-linked glycans (8 sites), 1 O-linked glycan (1 site)"/>
</dbReference>
<dbReference type="iPTMnet" id="Q16620"/>
<dbReference type="PhosphoSitePlus" id="Q16620"/>
<dbReference type="SwissPalm" id="Q16620"/>
<dbReference type="BioMuta" id="NTRK2"/>
<dbReference type="DMDM" id="2497560"/>
<dbReference type="jPOST" id="Q16620"/>
<dbReference type="MassIVE" id="Q16620"/>
<dbReference type="PaxDb" id="9606-ENSP00000277120"/>
<dbReference type="PeptideAtlas" id="Q16620"/>
<dbReference type="ProteomicsDB" id="60955">
    <molecule id="Q16620-1"/>
</dbReference>
<dbReference type="ProteomicsDB" id="60956">
    <molecule id="Q16620-2"/>
</dbReference>
<dbReference type="ProteomicsDB" id="60957">
    <molecule id="Q16620-3"/>
</dbReference>
<dbReference type="ProteomicsDB" id="60958">
    <molecule id="Q16620-4"/>
</dbReference>
<dbReference type="ProteomicsDB" id="60959">
    <molecule id="Q16620-5"/>
</dbReference>
<dbReference type="ProteomicsDB" id="60960">
    <molecule id="Q16620-6"/>
</dbReference>
<dbReference type="ProteomicsDB" id="60961">
    <molecule id="Q16620-7"/>
</dbReference>
<dbReference type="ABCD" id="Q16620">
    <property type="antibodies" value="146 sequenced antibodies"/>
</dbReference>
<dbReference type="Antibodypedia" id="2081">
    <property type="antibodies" value="1497 antibodies from 48 providers"/>
</dbReference>
<dbReference type="DNASU" id="4915"/>
<dbReference type="Ensembl" id="ENST00000277120.8">
    <molecule id="Q16620-4"/>
    <property type="protein sequence ID" value="ENSP00000277120.3"/>
    <property type="gene ID" value="ENSG00000148053.18"/>
</dbReference>
<dbReference type="Ensembl" id="ENST00000304053.11">
    <molecule id="Q16620-3"/>
    <property type="protein sequence ID" value="ENSP00000306167.7"/>
    <property type="gene ID" value="ENSG00000148053.18"/>
</dbReference>
<dbReference type="Ensembl" id="ENST00000359847.4">
    <molecule id="Q16620-2"/>
    <property type="protein sequence ID" value="ENSP00000352906.3"/>
    <property type="gene ID" value="ENSG00000148053.18"/>
</dbReference>
<dbReference type="Ensembl" id="ENST00000376208.6">
    <molecule id="Q16620-3"/>
    <property type="protein sequence ID" value="ENSP00000365381.1"/>
    <property type="gene ID" value="ENSG00000148053.18"/>
</dbReference>
<dbReference type="Ensembl" id="ENST00000376213.6">
    <molecule id="Q16620-1"/>
    <property type="protein sequence ID" value="ENSP00000365386.1"/>
    <property type="gene ID" value="ENSG00000148053.18"/>
</dbReference>
<dbReference type="Ensembl" id="ENST00000395882.6">
    <molecule id="Q16620-2"/>
    <property type="protein sequence ID" value="ENSP00000379221.1"/>
    <property type="gene ID" value="ENSG00000148053.18"/>
</dbReference>
<dbReference type="Ensembl" id="ENST00000685720.1">
    <molecule id="Q16620-5"/>
    <property type="protein sequence ID" value="ENSP00000509031.1"/>
    <property type="gene ID" value="ENSG00000148053.18"/>
</dbReference>
<dbReference type="Ensembl" id="ENST00000686259.1">
    <molecule id="Q16620-1"/>
    <property type="protein sequence ID" value="ENSP00000509743.1"/>
    <property type="gene ID" value="ENSG00000148053.18"/>
</dbReference>
<dbReference type="Ensembl" id="ENST00000686322.1">
    <molecule id="Q16620-7"/>
    <property type="protein sequence ID" value="ENSP00000510032.1"/>
    <property type="gene ID" value="ENSG00000148053.18"/>
</dbReference>
<dbReference type="Ensembl" id="ENST00000686324.1">
    <molecule id="Q16620-4"/>
    <property type="protein sequence ID" value="ENSP00000510134.1"/>
    <property type="gene ID" value="ENSG00000148053.18"/>
</dbReference>
<dbReference type="Ensembl" id="ENST00000686443.1">
    <molecule id="Q16620-3"/>
    <property type="protein sequence ID" value="ENSP00000509093.1"/>
    <property type="gene ID" value="ENSG00000148053.18"/>
</dbReference>
<dbReference type="Ensembl" id="ENST00000686496.1">
    <molecule id="Q16620-1"/>
    <property type="protein sequence ID" value="ENSP00000510060.1"/>
    <property type="gene ID" value="ENSG00000148053.18"/>
</dbReference>
<dbReference type="Ensembl" id="ENST00000687148.1">
    <molecule id="Q16620-2"/>
    <property type="protein sequence ID" value="ENSP00000510717.1"/>
    <property type="gene ID" value="ENSG00000148053.18"/>
</dbReference>
<dbReference type="Ensembl" id="ENST00000687596.1">
    <molecule id="Q16620-2"/>
    <property type="protein sequence ID" value="ENSP00000509999.1"/>
    <property type="gene ID" value="ENSG00000148053.18"/>
</dbReference>
<dbReference type="Ensembl" id="ENST00000687636.1">
    <molecule id="Q16620-5"/>
    <property type="protein sequence ID" value="ENSP00000508829.1"/>
    <property type="gene ID" value="ENSG00000148053.18"/>
</dbReference>
<dbReference type="Ensembl" id="ENST00000688013.1">
    <molecule id="Q16620-2"/>
    <property type="protein sequence ID" value="ENSP00000508443.1"/>
    <property type="gene ID" value="ENSG00000148053.18"/>
</dbReference>
<dbReference type="Ensembl" id="ENST00000689685.1">
    <molecule id="Q16620-2"/>
    <property type="protein sequence ID" value="ENSP00000509169.1"/>
    <property type="gene ID" value="ENSG00000148053.18"/>
</dbReference>
<dbReference type="Ensembl" id="ENST00000689815.1">
    <molecule id="Q16620-2"/>
    <property type="protein sequence ID" value="ENSP00000510451.1"/>
    <property type="gene ID" value="ENSG00000148053.18"/>
</dbReference>
<dbReference type="Ensembl" id="ENST00000690281.1">
    <molecule id="Q16620-2"/>
    <property type="protein sequence ID" value="ENSP00000510757.1"/>
    <property type="gene ID" value="ENSG00000148053.18"/>
</dbReference>
<dbReference type="Ensembl" id="ENST00000691415.1">
    <molecule id="Q16620-2"/>
    <property type="protein sequence ID" value="ENSP00000509058.1"/>
    <property type="gene ID" value="ENSG00000148053.18"/>
</dbReference>
<dbReference type="Ensembl" id="ENST00000691788.1">
    <molecule id="Q16620-1"/>
    <property type="protein sequence ID" value="ENSP00000509401.1"/>
    <property type="gene ID" value="ENSG00000148053.18"/>
</dbReference>
<dbReference type="Ensembl" id="ENST00000692181.1">
    <molecule id="Q16620-1"/>
    <property type="protein sequence ID" value="ENSP00000510619.1"/>
    <property type="gene ID" value="ENSG00000148053.18"/>
</dbReference>
<dbReference type="Ensembl" id="ENST00000692389.1">
    <molecule id="Q16620-2"/>
    <property type="protein sequence ID" value="ENSP00000508497.1"/>
    <property type="gene ID" value="ENSG00000148053.18"/>
</dbReference>
<dbReference type="Ensembl" id="ENST00000692506.1">
    <molecule id="Q16620-2"/>
    <property type="protein sequence ID" value="ENSP00000508622.1"/>
    <property type="gene ID" value="ENSG00000148053.18"/>
</dbReference>
<dbReference type="Ensembl" id="ENST00000692762.1">
    <molecule id="Q16620-2"/>
    <property type="protein sequence ID" value="ENSP00000510071.1"/>
    <property type="gene ID" value="ENSG00000148053.18"/>
</dbReference>
<dbReference type="Ensembl" id="ENST00000693109.1">
    <molecule id="Q16620-2"/>
    <property type="protein sequence ID" value="ENSP00000509456.1"/>
    <property type="gene ID" value="ENSG00000148053.18"/>
</dbReference>
<dbReference type="Ensembl" id="ENST00000693539.1">
    <molecule id="Q16620-5"/>
    <property type="protein sequence ID" value="ENSP00000510640.1"/>
    <property type="gene ID" value="ENSG00000148053.18"/>
</dbReference>
<dbReference type="GeneID" id="4915"/>
<dbReference type="KEGG" id="hsa:4915"/>
<dbReference type="MANE-Select" id="ENST00000277120.8">
    <molecule id="Q16620-4"/>
    <property type="protein sequence ID" value="ENSP00000277120.3"/>
    <property type="RefSeq nucleotide sequence ID" value="NM_006180.6"/>
    <property type="RefSeq protein sequence ID" value="NP_006171.2"/>
</dbReference>
<dbReference type="UCSC" id="uc004anz.1">
    <molecule id="Q16620-1"/>
    <property type="organism name" value="human"/>
</dbReference>
<dbReference type="AGR" id="HGNC:8032"/>
<dbReference type="CTD" id="4915"/>
<dbReference type="DisGeNET" id="4915"/>
<dbReference type="GeneCards" id="NTRK2"/>
<dbReference type="HGNC" id="HGNC:8032">
    <property type="gene designation" value="NTRK2"/>
</dbReference>
<dbReference type="HPA" id="ENSG00000148053">
    <property type="expression patterns" value="Tissue enhanced (brain, thyroid gland)"/>
</dbReference>
<dbReference type="MalaCards" id="NTRK2"/>
<dbReference type="MIM" id="600456">
    <property type="type" value="gene"/>
</dbReference>
<dbReference type="MIM" id="613886">
    <property type="type" value="phenotype"/>
</dbReference>
<dbReference type="MIM" id="617830">
    <property type="type" value="phenotype"/>
</dbReference>
<dbReference type="neXtProt" id="NX_Q16620"/>
<dbReference type="OpenTargets" id="ENSG00000148053"/>
<dbReference type="Orphanet" id="99704">
    <property type="disease" value="Early-onset obesity-hyperphagia-severe developmental delay syndrome"/>
</dbReference>
<dbReference type="Orphanet" id="3451">
    <property type="disease" value="Infantile epileptic spasms syndrome"/>
</dbReference>
<dbReference type="Orphanet" id="442835">
    <property type="disease" value="Non-specific early-onset epileptic encephalopathy"/>
</dbReference>
<dbReference type="Orphanet" id="251615">
    <property type="disease" value="Pilomyxoid astrocytoma"/>
</dbReference>
<dbReference type="PharmGKB" id="PA31818"/>
<dbReference type="VEuPathDB" id="HostDB:ENSG00000148053"/>
<dbReference type="eggNOG" id="KOG1026">
    <property type="taxonomic scope" value="Eukaryota"/>
</dbReference>
<dbReference type="GeneTree" id="ENSGT00940000155181"/>
<dbReference type="HOGENOM" id="CLU_000288_74_1_1"/>
<dbReference type="InParanoid" id="Q16620"/>
<dbReference type="OMA" id="HIAMQIA"/>
<dbReference type="OrthoDB" id="10005095at2759"/>
<dbReference type="PAN-GO" id="Q16620">
    <property type="GO annotations" value="16 GO annotations based on evolutionary models"/>
</dbReference>
<dbReference type="PhylomeDB" id="Q16620"/>
<dbReference type="TreeFam" id="TF106465"/>
<dbReference type="BRENDA" id="2.7.10.1">
    <property type="organism ID" value="2681"/>
</dbReference>
<dbReference type="PathwayCommons" id="Q16620"/>
<dbReference type="Reactome" id="R-HSA-1257604">
    <property type="pathway name" value="PIP3 activates AKT signaling"/>
</dbReference>
<dbReference type="Reactome" id="R-HSA-187024">
    <property type="pathway name" value="NGF-independant TRKA activation"/>
</dbReference>
<dbReference type="Reactome" id="R-HSA-2219530">
    <property type="pathway name" value="Constitutive Signaling by Aberrant PI3K in Cancer"/>
</dbReference>
<dbReference type="Reactome" id="R-HSA-6811558">
    <property type="pathway name" value="PI5P, PP2A and IER3 Regulate PI3K/AKT Signaling"/>
</dbReference>
<dbReference type="Reactome" id="R-HSA-9024909">
    <property type="pathway name" value="BDNF activates NTRK2 (TRKB) signaling"/>
</dbReference>
<dbReference type="Reactome" id="R-HSA-9025046">
    <property type="pathway name" value="NTF3 activates NTRK2 (TRKB) signaling"/>
</dbReference>
<dbReference type="Reactome" id="R-HSA-9026357">
    <property type="pathway name" value="NTF4 activates NTRK2 (TRKB) signaling"/>
</dbReference>
<dbReference type="Reactome" id="R-HSA-9026519">
    <property type="pathway name" value="Activated NTRK2 signals through RAS"/>
</dbReference>
<dbReference type="Reactome" id="R-HSA-9026527">
    <property type="pathway name" value="Activated NTRK2 signals through PLCG1"/>
</dbReference>
<dbReference type="Reactome" id="R-HSA-9028335">
    <property type="pathway name" value="Activated NTRK2 signals through PI3K"/>
</dbReference>
<dbReference type="Reactome" id="R-HSA-9028731">
    <property type="pathway name" value="Activated NTRK2 signals through FRS2 and FRS3"/>
</dbReference>
<dbReference type="Reactome" id="R-HSA-9032500">
    <property type="pathway name" value="Activated NTRK2 signals through FYN"/>
</dbReference>
<dbReference type="Reactome" id="R-HSA-9032759">
    <property type="pathway name" value="NTRK2 activates RAC1"/>
</dbReference>
<dbReference type="Reactome" id="R-HSA-9032845">
    <property type="pathway name" value="Activated NTRK2 signals through CDK5"/>
</dbReference>
<dbReference type="SignaLink" id="Q16620"/>
<dbReference type="SIGNOR" id="Q16620"/>
<dbReference type="BioGRID-ORCS" id="4915">
    <property type="hits" value="10 hits in 1188 CRISPR screens"/>
</dbReference>
<dbReference type="ChiTaRS" id="NTRK2">
    <property type="organism name" value="human"/>
</dbReference>
<dbReference type="EvolutionaryTrace" id="Q16620"/>
<dbReference type="GeneWiki" id="TrkB_receptor"/>
<dbReference type="GenomeRNAi" id="4915"/>
<dbReference type="Pharos" id="Q16620">
    <property type="development level" value="Tclin"/>
</dbReference>
<dbReference type="PRO" id="PR:Q16620"/>
<dbReference type="Proteomes" id="UP000005640">
    <property type="component" value="Chromosome 9"/>
</dbReference>
<dbReference type="RNAct" id="Q16620">
    <property type="molecule type" value="protein"/>
</dbReference>
<dbReference type="Bgee" id="ENSG00000148053">
    <property type="expression patterns" value="Expressed in cranial nerve II and 196 other cell types or tissues"/>
</dbReference>
<dbReference type="ExpressionAtlas" id="Q16620">
    <property type="expression patterns" value="baseline and differential"/>
</dbReference>
<dbReference type="GO" id="GO:0030424">
    <property type="term" value="C:axon"/>
    <property type="evidence" value="ECO:0000250"/>
    <property type="project" value="UniProtKB"/>
</dbReference>
<dbReference type="GO" id="GO:0043679">
    <property type="term" value="C:axon terminus"/>
    <property type="evidence" value="ECO:0000318"/>
    <property type="project" value="GO_Central"/>
</dbReference>
<dbReference type="GO" id="GO:0005829">
    <property type="term" value="C:cytosol"/>
    <property type="evidence" value="ECO:0007669"/>
    <property type="project" value="Ensembl"/>
</dbReference>
<dbReference type="GO" id="GO:0030425">
    <property type="term" value="C:dendrite"/>
    <property type="evidence" value="ECO:0000250"/>
    <property type="project" value="UniProtKB"/>
</dbReference>
<dbReference type="GO" id="GO:0043197">
    <property type="term" value="C:dendritic spine"/>
    <property type="evidence" value="ECO:0000318"/>
    <property type="project" value="GO_Central"/>
</dbReference>
<dbReference type="GO" id="GO:0005769">
    <property type="term" value="C:early endosome"/>
    <property type="evidence" value="ECO:0000250"/>
    <property type="project" value="UniProtKB"/>
</dbReference>
<dbReference type="GO" id="GO:0031901">
    <property type="term" value="C:early endosome membrane"/>
    <property type="evidence" value="ECO:0007669"/>
    <property type="project" value="UniProtKB-SubCell"/>
</dbReference>
<dbReference type="GO" id="GO:0048471">
    <property type="term" value="C:perinuclear region of cytoplasm"/>
    <property type="evidence" value="ECO:0000250"/>
    <property type="project" value="UniProtKB"/>
</dbReference>
<dbReference type="GO" id="GO:0005886">
    <property type="term" value="C:plasma membrane"/>
    <property type="evidence" value="ECO:0000314"/>
    <property type="project" value="HPA"/>
</dbReference>
<dbReference type="GO" id="GO:0014069">
    <property type="term" value="C:postsynaptic density"/>
    <property type="evidence" value="ECO:0000250"/>
    <property type="project" value="ARUK-UCL"/>
</dbReference>
<dbReference type="GO" id="GO:0043235">
    <property type="term" value="C:receptor complex"/>
    <property type="evidence" value="ECO:0000314"/>
    <property type="project" value="MGI"/>
</dbReference>
<dbReference type="GO" id="GO:0043195">
    <property type="term" value="C:terminal bouton"/>
    <property type="evidence" value="ECO:0007669"/>
    <property type="project" value="Ensembl"/>
</dbReference>
<dbReference type="GO" id="GO:0005524">
    <property type="term" value="F:ATP binding"/>
    <property type="evidence" value="ECO:0007669"/>
    <property type="project" value="UniProtKB-KW"/>
</dbReference>
<dbReference type="GO" id="GO:0048403">
    <property type="term" value="F:brain-derived neurotrophic factor binding"/>
    <property type="evidence" value="ECO:0000250"/>
    <property type="project" value="UniProtKB"/>
</dbReference>
<dbReference type="GO" id="GO:0060175">
    <property type="term" value="F:brain-derived neurotrophic factor receptor activity"/>
    <property type="evidence" value="ECO:0000315"/>
    <property type="project" value="UniProtKB"/>
</dbReference>
<dbReference type="GO" id="GO:0043121">
    <property type="term" value="F:neurotrophin binding"/>
    <property type="evidence" value="ECO:0000314"/>
    <property type="project" value="UniProtKB"/>
</dbReference>
<dbReference type="GO" id="GO:0002020">
    <property type="term" value="F:protease binding"/>
    <property type="evidence" value="ECO:0000353"/>
    <property type="project" value="ARUK-UCL"/>
</dbReference>
<dbReference type="GO" id="GO:0042803">
    <property type="term" value="F:protein homodimerization activity"/>
    <property type="evidence" value="ECO:0000250"/>
    <property type="project" value="UniProtKB"/>
</dbReference>
<dbReference type="GO" id="GO:0031547">
    <property type="term" value="P:brain-derived neurotrophic factor receptor signaling pathway"/>
    <property type="evidence" value="ECO:0000315"/>
    <property type="project" value="UniProtKB"/>
</dbReference>
<dbReference type="GO" id="GO:0007169">
    <property type="term" value="P:cell surface receptor protein tyrosine kinase signaling pathway"/>
    <property type="evidence" value="ECO:0000318"/>
    <property type="project" value="GO_Central"/>
</dbReference>
<dbReference type="GO" id="GO:0071230">
    <property type="term" value="P:cellular response to amino acid stimulus"/>
    <property type="evidence" value="ECO:0007669"/>
    <property type="project" value="Ensembl"/>
</dbReference>
<dbReference type="GO" id="GO:1990416">
    <property type="term" value="P:cellular response to brain-derived neurotrophic factor stimulus"/>
    <property type="evidence" value="ECO:0000318"/>
    <property type="project" value="GO_Central"/>
</dbReference>
<dbReference type="GO" id="GO:0021954">
    <property type="term" value="P:central nervous system neuron development"/>
    <property type="evidence" value="ECO:0000250"/>
    <property type="project" value="UniProtKB"/>
</dbReference>
<dbReference type="GO" id="GO:0021987">
    <property type="term" value="P:cerebral cortex development"/>
    <property type="evidence" value="ECO:0000250"/>
    <property type="project" value="UniProtKB"/>
</dbReference>
<dbReference type="GO" id="GO:0007623">
    <property type="term" value="P:circadian rhythm"/>
    <property type="evidence" value="ECO:0007669"/>
    <property type="project" value="Ensembl"/>
</dbReference>
<dbReference type="GO" id="GO:0007631">
    <property type="term" value="P:feeding behavior"/>
    <property type="evidence" value="ECO:0007669"/>
    <property type="project" value="Ensembl"/>
</dbReference>
<dbReference type="GO" id="GO:0014047">
    <property type="term" value="P:glutamate secretion"/>
    <property type="evidence" value="ECO:0007669"/>
    <property type="project" value="Ensembl"/>
</dbReference>
<dbReference type="GO" id="GO:0007612">
    <property type="term" value="P:learning"/>
    <property type="evidence" value="ECO:0000250"/>
    <property type="project" value="UniProtKB"/>
</dbReference>
<dbReference type="GO" id="GO:0060291">
    <property type="term" value="P:long-term synaptic potentiation"/>
    <property type="evidence" value="ECO:0007669"/>
    <property type="project" value="Ensembl"/>
</dbReference>
<dbReference type="GO" id="GO:0042490">
    <property type="term" value="P:mechanoreceptor differentiation"/>
    <property type="evidence" value="ECO:0007669"/>
    <property type="project" value="Ensembl"/>
</dbReference>
<dbReference type="GO" id="GO:0022011">
    <property type="term" value="P:myelination in peripheral nervous system"/>
    <property type="evidence" value="ECO:0007669"/>
    <property type="project" value="Ensembl"/>
</dbReference>
<dbReference type="GO" id="GO:1902430">
    <property type="term" value="P:negative regulation of amyloid-beta formation"/>
    <property type="evidence" value="ECO:0000316"/>
    <property type="project" value="ARUK-UCL"/>
</dbReference>
<dbReference type="GO" id="GO:2000811">
    <property type="term" value="P:negative regulation of anoikis"/>
    <property type="evidence" value="ECO:0007669"/>
    <property type="project" value="Ensembl"/>
</dbReference>
<dbReference type="GO" id="GO:0043524">
    <property type="term" value="P:negative regulation of neuron apoptotic process"/>
    <property type="evidence" value="ECO:0000250"/>
    <property type="project" value="UniProtKB"/>
</dbReference>
<dbReference type="GO" id="GO:0030182">
    <property type="term" value="P:neuron differentiation"/>
    <property type="evidence" value="ECO:0000250"/>
    <property type="project" value="UniProtKB"/>
</dbReference>
<dbReference type="GO" id="GO:0001764">
    <property type="term" value="P:neuron migration"/>
    <property type="evidence" value="ECO:0000250"/>
    <property type="project" value="UniProtKB"/>
</dbReference>
<dbReference type="GO" id="GO:0019227">
    <property type="term" value="P:neuronal action potential propagation"/>
    <property type="evidence" value="ECO:0007669"/>
    <property type="project" value="Ensembl"/>
</dbReference>
<dbReference type="GO" id="GO:0048709">
    <property type="term" value="P:oligodendrocyte differentiation"/>
    <property type="evidence" value="ECO:0007669"/>
    <property type="project" value="Ensembl"/>
</dbReference>
<dbReference type="GO" id="GO:0048935">
    <property type="term" value="P:peripheral nervous system neuron development"/>
    <property type="evidence" value="ECO:0007669"/>
    <property type="project" value="Ensembl"/>
</dbReference>
<dbReference type="GO" id="GO:0050772">
    <property type="term" value="P:positive regulation of axonogenesis"/>
    <property type="evidence" value="ECO:0000250"/>
    <property type="project" value="UniProtKB"/>
</dbReference>
<dbReference type="GO" id="GO:0008284">
    <property type="term" value="P:positive regulation of cell population proliferation"/>
    <property type="evidence" value="ECO:0000250"/>
    <property type="project" value="UniProtKB"/>
</dbReference>
<dbReference type="GO" id="GO:0010628">
    <property type="term" value="P:positive regulation of gene expression"/>
    <property type="evidence" value="ECO:0000250"/>
    <property type="project" value="UniProtKB"/>
</dbReference>
<dbReference type="GO" id="GO:0043410">
    <property type="term" value="P:positive regulation of MAPK cascade"/>
    <property type="evidence" value="ECO:0000250"/>
    <property type="project" value="UniProtKB"/>
</dbReference>
<dbReference type="GO" id="GO:0010976">
    <property type="term" value="P:positive regulation of neuron projection development"/>
    <property type="evidence" value="ECO:0000250"/>
    <property type="project" value="UniProtKB"/>
</dbReference>
<dbReference type="GO" id="GO:0051897">
    <property type="term" value="P:positive regulation of phosphatidylinositol 3-kinase/protein kinase B signal transduction"/>
    <property type="evidence" value="ECO:0000250"/>
    <property type="project" value="UniProtKB"/>
</dbReference>
<dbReference type="GO" id="GO:0051965">
    <property type="term" value="P:positive regulation of synapse assembly"/>
    <property type="evidence" value="ECO:0007669"/>
    <property type="project" value="Ensembl"/>
</dbReference>
<dbReference type="GO" id="GO:0046777">
    <property type="term" value="P:protein autophosphorylation"/>
    <property type="evidence" value="ECO:0000250"/>
    <property type="project" value="UniProtKB"/>
</dbReference>
<dbReference type="GO" id="GO:0043087">
    <property type="term" value="P:regulation of GTPase activity"/>
    <property type="evidence" value="ECO:0000250"/>
    <property type="project" value="UniProtKB"/>
</dbReference>
<dbReference type="GO" id="GO:0046548">
    <property type="term" value="P:retinal rod cell development"/>
    <property type="evidence" value="ECO:0007669"/>
    <property type="project" value="Ensembl"/>
</dbReference>
<dbReference type="GO" id="GO:0099183">
    <property type="term" value="P:trans-synaptic signaling by BDNF, modulating synaptic transmission"/>
    <property type="evidence" value="ECO:0007669"/>
    <property type="project" value="Ensembl"/>
</dbReference>
<dbReference type="GO" id="GO:0001570">
    <property type="term" value="P:vasculogenesis"/>
    <property type="evidence" value="ECO:0007669"/>
    <property type="project" value="Ensembl"/>
</dbReference>
<dbReference type="CDD" id="cd05855">
    <property type="entry name" value="IgI_TrkB_d5"/>
    <property type="match status" value="1"/>
</dbReference>
<dbReference type="CDD" id="cd05093">
    <property type="entry name" value="PTKc_TrkB"/>
    <property type="match status" value="1"/>
</dbReference>
<dbReference type="FunFam" id="2.60.40.10:FF:000239">
    <property type="entry name" value="BDNF/NT-3 growth factors receptor"/>
    <property type="match status" value="1"/>
</dbReference>
<dbReference type="FunFam" id="3.80.10.10:FF:000048">
    <property type="entry name" value="BDNF/NT-3 growth factors receptor"/>
    <property type="match status" value="1"/>
</dbReference>
<dbReference type="FunFam" id="1.10.510.10:FF:000034">
    <property type="entry name" value="Tyrosine-protein kinase receptor"/>
    <property type="match status" value="1"/>
</dbReference>
<dbReference type="FunFam" id="2.60.40.10:FF:000486">
    <property type="entry name" value="Tyrosine-protein kinase receptor"/>
    <property type="match status" value="1"/>
</dbReference>
<dbReference type="FunFam" id="3.30.200.20:FF:000033">
    <property type="entry name" value="Tyrosine-protein kinase receptor"/>
    <property type="match status" value="1"/>
</dbReference>
<dbReference type="Gene3D" id="2.60.40.10">
    <property type="entry name" value="Immunoglobulins"/>
    <property type="match status" value="2"/>
</dbReference>
<dbReference type="Gene3D" id="3.30.200.20">
    <property type="entry name" value="Phosphorylase Kinase, domain 1"/>
    <property type="match status" value="1"/>
</dbReference>
<dbReference type="Gene3D" id="3.80.10.10">
    <property type="entry name" value="Ribonuclease Inhibitor"/>
    <property type="match status" value="1"/>
</dbReference>
<dbReference type="Gene3D" id="1.10.510.10">
    <property type="entry name" value="Transferase(Phosphotransferase) domain 1"/>
    <property type="match status" value="1"/>
</dbReference>
<dbReference type="IDEAL" id="IID00672"/>
<dbReference type="InterPro" id="IPR000483">
    <property type="entry name" value="Cys-rich_flank_reg_C"/>
</dbReference>
<dbReference type="InterPro" id="IPR007110">
    <property type="entry name" value="Ig-like_dom"/>
</dbReference>
<dbReference type="InterPro" id="IPR036179">
    <property type="entry name" value="Ig-like_dom_sf"/>
</dbReference>
<dbReference type="InterPro" id="IPR013783">
    <property type="entry name" value="Ig-like_fold"/>
</dbReference>
<dbReference type="InterPro" id="IPR013098">
    <property type="entry name" value="Ig_I-set"/>
</dbReference>
<dbReference type="InterPro" id="IPR003599">
    <property type="entry name" value="Ig_sub"/>
</dbReference>
<dbReference type="InterPro" id="IPR003598">
    <property type="entry name" value="Ig_sub2"/>
</dbReference>
<dbReference type="InterPro" id="IPR011009">
    <property type="entry name" value="Kinase-like_dom_sf"/>
</dbReference>
<dbReference type="InterPro" id="IPR001611">
    <property type="entry name" value="Leu-rich_rpt"/>
</dbReference>
<dbReference type="InterPro" id="IPR032675">
    <property type="entry name" value="LRR_dom_sf"/>
</dbReference>
<dbReference type="InterPro" id="IPR000372">
    <property type="entry name" value="LRRNT"/>
</dbReference>
<dbReference type="InterPro" id="IPR020777">
    <property type="entry name" value="NTRK"/>
</dbReference>
<dbReference type="InterPro" id="IPR020455">
    <property type="entry name" value="NTRK2"/>
</dbReference>
<dbReference type="InterPro" id="IPR031635">
    <property type="entry name" value="NTRK_LRRCT"/>
</dbReference>
<dbReference type="InterPro" id="IPR000719">
    <property type="entry name" value="Prot_kinase_dom"/>
</dbReference>
<dbReference type="InterPro" id="IPR017441">
    <property type="entry name" value="Protein_kinase_ATP_BS"/>
</dbReference>
<dbReference type="InterPro" id="IPR050122">
    <property type="entry name" value="RTK"/>
</dbReference>
<dbReference type="InterPro" id="IPR001245">
    <property type="entry name" value="Ser-Thr/Tyr_kinase_cat_dom"/>
</dbReference>
<dbReference type="InterPro" id="IPR008266">
    <property type="entry name" value="Tyr_kinase_AS"/>
</dbReference>
<dbReference type="InterPro" id="IPR020635">
    <property type="entry name" value="Tyr_kinase_cat_dom"/>
</dbReference>
<dbReference type="InterPro" id="IPR002011">
    <property type="entry name" value="Tyr_kinase_rcpt_2_CS"/>
</dbReference>
<dbReference type="PANTHER" id="PTHR24416:SF136">
    <property type="entry name" value="BDNF_NT-3 GROWTH FACTORS RECEPTOR"/>
    <property type="match status" value="1"/>
</dbReference>
<dbReference type="PANTHER" id="PTHR24416">
    <property type="entry name" value="TYROSINE-PROTEIN KINASE RECEPTOR"/>
    <property type="match status" value="1"/>
</dbReference>
<dbReference type="Pfam" id="PF07679">
    <property type="entry name" value="I-set"/>
    <property type="match status" value="2"/>
</dbReference>
<dbReference type="Pfam" id="PF13855">
    <property type="entry name" value="LRR_8"/>
    <property type="match status" value="1"/>
</dbReference>
<dbReference type="Pfam" id="PF16920">
    <property type="entry name" value="LRRCT_2"/>
    <property type="match status" value="1"/>
</dbReference>
<dbReference type="Pfam" id="PF01462">
    <property type="entry name" value="LRRNT"/>
    <property type="match status" value="1"/>
</dbReference>
<dbReference type="Pfam" id="PF07714">
    <property type="entry name" value="PK_Tyr_Ser-Thr"/>
    <property type="match status" value="1"/>
</dbReference>
<dbReference type="PRINTS" id="PR01939">
    <property type="entry name" value="NTKRECEPTOR"/>
</dbReference>
<dbReference type="PRINTS" id="PR01941">
    <property type="entry name" value="NTKRECEPTOR2"/>
</dbReference>
<dbReference type="PRINTS" id="PR00109">
    <property type="entry name" value="TYRKINASE"/>
</dbReference>
<dbReference type="SMART" id="SM00409">
    <property type="entry name" value="IG"/>
    <property type="match status" value="1"/>
</dbReference>
<dbReference type="SMART" id="SM00408">
    <property type="entry name" value="IGc2"/>
    <property type="match status" value="1"/>
</dbReference>
<dbReference type="SMART" id="SM00082">
    <property type="entry name" value="LRRCT"/>
    <property type="match status" value="1"/>
</dbReference>
<dbReference type="SMART" id="SM00013">
    <property type="entry name" value="LRRNT"/>
    <property type="match status" value="1"/>
</dbReference>
<dbReference type="SMART" id="SM00219">
    <property type="entry name" value="TyrKc"/>
    <property type="match status" value="1"/>
</dbReference>
<dbReference type="SUPFAM" id="SSF48726">
    <property type="entry name" value="Immunoglobulin"/>
    <property type="match status" value="2"/>
</dbReference>
<dbReference type="SUPFAM" id="SSF52058">
    <property type="entry name" value="L domain-like"/>
    <property type="match status" value="1"/>
</dbReference>
<dbReference type="SUPFAM" id="SSF56112">
    <property type="entry name" value="Protein kinase-like (PK-like)"/>
    <property type="match status" value="1"/>
</dbReference>
<dbReference type="PROSITE" id="PS50835">
    <property type="entry name" value="IG_LIKE"/>
    <property type="match status" value="1"/>
</dbReference>
<dbReference type="PROSITE" id="PS00107">
    <property type="entry name" value="PROTEIN_KINASE_ATP"/>
    <property type="match status" value="1"/>
</dbReference>
<dbReference type="PROSITE" id="PS50011">
    <property type="entry name" value="PROTEIN_KINASE_DOM"/>
    <property type="match status" value="1"/>
</dbReference>
<dbReference type="PROSITE" id="PS00109">
    <property type="entry name" value="PROTEIN_KINASE_TYR"/>
    <property type="match status" value="1"/>
</dbReference>
<dbReference type="PROSITE" id="PS00239">
    <property type="entry name" value="RECEPTOR_TYR_KIN_II"/>
    <property type="match status" value="1"/>
</dbReference>
<comment type="function">
    <text evidence="3 14 21">Receptor tyrosine kinase involved in the development and the maturation of the central and the peripheral nervous systems through regulation of neuron survival, proliferation, migration, differentiation, and synapse formation and plasticity (By similarity). Receptor for BDNF/brain-derived neurotrophic factor and NTF4/neurotrophin-4. Alternatively can also bind NTF3/neurotrophin-3 which is less efficient in activating the receptor but regulates neuron survival through NTRK2 (PubMed:15494731, PubMed:7574684). Upon ligand-binding, undergoes homodimerization, autophosphorylation and activation (PubMed:15494731). Recruits, phosphorylates and/or activates several downstream effectors including SHC1, FRS2, SH2B1, SH2B2 and PLCG1 that regulate distinct overlapping signaling cascades. Through SHC1, FRS2, SH2B1, SH2B2 activates the GRB2-Ras-MAPK cascade that regulates for instance neuronal differentiation including neurite outgrowth. Through the same effectors controls the Ras-PI3 kinase-AKT1 signaling cascade that mainly regulates growth and survival. Through PLCG1 and the downstream protein kinase C-regulated pathways controls synaptic plasticity. Thereby, plays a role in learning and memory by regulating both short term synaptic function and long-term potentiation. PLCG1 also leads to NF-Kappa-B activation and the transcription of genes involved in cell survival. Hence, it is able to suppress anoikis, the apoptosis resulting from loss of cell-matrix interactions. May also play a role in neutrophin-dependent calcium signaling in glial cells and mediate communication between neurons and glia.</text>
</comment>
<comment type="catalytic activity">
    <reaction evidence="8 14">
        <text>L-tyrosyl-[protein] + ATP = O-phospho-L-tyrosyl-[protein] + ADP + H(+)</text>
        <dbReference type="Rhea" id="RHEA:10596"/>
        <dbReference type="Rhea" id="RHEA-COMP:10136"/>
        <dbReference type="Rhea" id="RHEA-COMP:20101"/>
        <dbReference type="ChEBI" id="CHEBI:15378"/>
        <dbReference type="ChEBI" id="CHEBI:30616"/>
        <dbReference type="ChEBI" id="CHEBI:46858"/>
        <dbReference type="ChEBI" id="CHEBI:61978"/>
        <dbReference type="ChEBI" id="CHEBI:456216"/>
        <dbReference type="EC" id="2.7.10.1"/>
    </reaction>
</comment>
<comment type="activity regulation">
    <text evidence="3 4">The neuronal activity and the influx of calcium positively regulate the kinase activity and the internalization of the receptor which are both important for active signaling. Regulated by NGFR that may control the internalization of the receptor. NGFR may also stimulate the activation by BDNF compared to NTF3 and NTF4. SH2D1A inhibits the autophosphorylation of the receptor, and alters the recruitment and activation of downstream effectors and signaling cascades. The formation of active receptors dimers able to fully transduce the ligand-mediated signal, may be negatively regulated by the formation of inactive heterodimers with the non-catalytic isoforms (By similarity).</text>
</comment>
<comment type="subunit">
    <text evidence="2 3 4 10 12 20">Exists in a dynamic equilibrium between monomeric (low affinity) and dimeric (high affinity) structures. Interacts (phosphorylated upon activation by BDNF) with SHC1; mediates SHC1 phosphorylation and activation. Interacts (phosphorylated upon activation by BDNF) with PLCG1 and/or PLCG2; mediates PLCG1 phosphorylation and activation. Interacts with SH2B1 and SH2B2. Interacts with NGFR; may regulate the ligand specificity of the receptor (By similarity). Interacts with SORCS2; this interaction is important for normal targeting to post-synaptic densities in response to high-frequency stimulation (By similarity). Interacts (phosphorylated upon ligand-binding) with SH2D1A; regulates NTRK2. Interacts with SQSTM1 and KIDINS220 (By similarity). Interacts (phosphorylated upon ligand-binding) with FRS2; activates the MAPK signaling pathway (PubMed:10092678). Interacts with APPL1 (By similarity). Interacts with MAPK8IP3/JIP3 and KLC1; interaction with KLC1 is mediated by MAPK8IP3/JIP3 (By similarity). Interacts with SORL1; this interaction facilitates NTRK2 trafficking between synaptic plasma membranes, postsynaptic densities and cell soma, hence positively regulates BDNF signaling (By similarity). Interacts with SLITRK2 (PubMed:35840571).</text>
</comment>
<comment type="interaction">
    <interactant intactId="EBI-3904881">
        <id>Q16620</id>
    </interactant>
    <interactant intactId="EBI-3936704">
        <id>Q16288</id>
        <label>NTRK3</label>
    </interactant>
    <organismsDiffer>false</organismsDiffer>
    <experiments>3</experiments>
</comment>
<comment type="interaction">
    <interactant intactId="EBI-3904881">
        <id>Q16620</id>
    </interactant>
    <interactant intactId="EBI-2008531">
        <id>Q03114</id>
        <label>Cdk5</label>
    </interactant>
    <organismsDiffer>true</organismsDiffer>
    <experiments>3</experiments>
</comment>
<comment type="subcellular location">
    <subcellularLocation>
        <location evidence="14">Cell membrane</location>
        <topology evidence="31">Single-pass type I membrane protein</topology>
    </subcellularLocation>
    <subcellularLocation>
        <location evidence="3">Endosome membrane</location>
        <topology evidence="3">Single-pass type I membrane protein</topology>
    </subcellularLocation>
    <subcellularLocation>
        <location evidence="3">Early endosome membrane</location>
    </subcellularLocation>
    <subcellularLocation>
        <location evidence="4">Cell projection</location>
        <location evidence="4">Axon</location>
    </subcellularLocation>
    <subcellularLocation>
        <location evidence="4">Cell projection</location>
        <location evidence="4">Dendrite</location>
    </subcellularLocation>
    <subcellularLocation>
        <location evidence="4">Cytoplasm</location>
        <location evidence="4">Perinuclear region</location>
    </subcellularLocation>
    <subcellularLocation>
        <location evidence="3">Postsynaptic density</location>
    </subcellularLocation>
    <text evidence="3">Internalized to endosomes upon ligand-binding.</text>
</comment>
<comment type="alternative products">
    <event type="alternative splicing"/>
    <isoform>
        <id>Q16620-1</id>
        <name>TrkB</name>
        <name>gp145-TrkB</name>
        <sequence type="displayed"/>
    </isoform>
    <isoform>
        <id>Q16620-2</id>
        <name>TrkB-T1</name>
        <sequence type="described" ref="VSP_002901 VSP_002902"/>
    </isoform>
    <isoform>
        <id>Q16620-3</id>
        <name>TrkB-T-Shc</name>
        <sequence type="described" ref="VSP_002903 VSP_002904"/>
    </isoform>
    <isoform>
        <id>Q16620-4</id>
        <name>4</name>
        <sequence type="described" ref="VSP_041942"/>
    </isoform>
    <isoform>
        <id>Q16620-5</id>
        <name>5</name>
        <sequence type="described" ref="VSP_041942 VSP_002903 VSP_002904"/>
    </isoform>
    <isoform>
        <id>Q16620-6</id>
        <name>TrkB-T-TK</name>
        <sequence type="described" ref="VSP_042178 VSP_042179"/>
    </isoform>
    <isoform>
        <id>Q16620-7</id>
        <name>TrkB-N-T1</name>
        <sequence type="described" ref="VSP_042177 VSP_002901 VSP_002902"/>
    </isoform>
    <text>Additional isoforms seem to exist.</text>
</comment>
<comment type="tissue specificity">
    <text evidence="13 22">Isoform TrkB is expressed in the central and peripheral nervous system. In the central nervous system (CNS), expression is observed in the cerebral cortex, hippocampus, thalamus, choroid plexus, granular layer of the cerebellum, brain stem, and spinal cord. In the peripheral nervous system, it is expressed in many cranial ganglia, the ophthalmic nerve, the vestibular system, multiple facial structures, the submaxillary glands, and dorsal root ganglia. Isoform TrkB-T1 is mainly expressed in the brain but also detected in other tissues including pancreas, kidney and heart. Isoform TrkB-T-Shc is predominantly expressed in the brain.</text>
</comment>
<comment type="developmental stage">
    <text evidence="22">Widely expressed in fetal brain.</text>
</comment>
<comment type="PTM">
    <text evidence="14">Phosphorylated. Undergoes ligand-mediated autophosphorylation that is required for interaction with SHC1 and PLCG1 and other downstream effectors. Isoform TrkB-T-Shc is not phosphorylated.</text>
</comment>
<comment type="PTM">
    <text evidence="1">Ubiquitinated. Undergoes polyubiquitination upon activation; regulated by NGFR. Ubiquitination regulates the internalization of the receptor (By similarity).</text>
</comment>
<comment type="disease" evidence="19">
    <disease id="DI-05170">
        <name>Developmental and epileptic encephalopathy 58</name>
        <acronym>DEE58</acronym>
        <description>A form of epileptic encephalopathy, a heterogeneous group of severe early-onset epilepsies characterized by refractory seizures, neurodevelopmental impairment, and poor prognosis. Development is normal prior to seizure onset, after which cognitive and motor delays become apparent. DEE58 is an autosomal dominant condition characterized by onset of refractory seizures in the first days or months of life.</description>
        <dbReference type="MIM" id="617830"/>
    </disease>
    <text>The disease may be caused by variants affecting the gene represented in this entry.</text>
</comment>
<comment type="disease" evidence="14 18 19">
    <disease id="DI-03120">
        <name>Obesity, hyperphagia, and developmental delay</name>
        <acronym>OBHD</acronym>
        <description>A disorder characterized by early-onset obesity, hyperphagia, and severe developmental delay in motor function, speech, and language.</description>
        <dbReference type="MIM" id="613886"/>
    </disease>
    <text>The disease is caused by variants affecting the gene represented in this entry.</text>
</comment>
<comment type="miscellaneous">
    <text>Trk also stands for tropomyosin-related kinase since the first Trk was isolated as an oncogenic protein which was the result of a fusion between the tropomyosin gene TPM3 and NTRK1.</text>
</comment>
<comment type="miscellaneous">
    <molecule>Isoform TrkB-T1</molecule>
    <text evidence="31">Non-catalytic isoform.</text>
</comment>
<comment type="similarity">
    <text evidence="7">Belongs to the protein kinase superfamily. Tyr protein kinase family. Insulin receptor subfamily.</text>
</comment>
<comment type="online information" name="Atlas of Genetics and Cytogenetics in Oncology and Haematology">
    <link uri="https://atlasgeneticsoncology.org/gene/41589/NTRK2"/>
</comment>
<gene>
    <name type="primary">NTRK2</name>
    <name type="synonym">TRKB</name>
</gene>
<feature type="signal peptide">
    <location>
        <begin position="1"/>
        <end position="31"/>
    </location>
</feature>
<feature type="chain" id="PRO_0000016727" description="BDNF/NT-3 growth factors receptor">
    <location>
        <begin position="32"/>
        <end position="822"/>
    </location>
</feature>
<feature type="topological domain" description="Extracellular" evidence="5">
    <location>
        <begin position="32"/>
        <end position="430"/>
    </location>
</feature>
<feature type="transmembrane region" description="Helical" evidence="5">
    <location>
        <begin position="431"/>
        <end position="454"/>
    </location>
</feature>
<feature type="topological domain" description="Cytoplasmic" evidence="5">
    <location>
        <begin position="455"/>
        <end position="822"/>
    </location>
</feature>
<feature type="domain" description="LRRNT">
    <location>
        <begin position="32"/>
        <end position="61"/>
    </location>
</feature>
<feature type="repeat" description="LRR 1">
    <location>
        <begin position="92"/>
        <end position="113"/>
    </location>
</feature>
<feature type="repeat" description="LRR 2">
    <location>
        <begin position="116"/>
        <end position="137"/>
    </location>
</feature>
<feature type="domain" description="LRRCT">
    <location>
        <begin position="148"/>
        <end position="196"/>
    </location>
</feature>
<feature type="domain" description="Ig-like C2-type 1">
    <location>
        <begin position="197"/>
        <end position="282"/>
    </location>
</feature>
<feature type="domain" description="Ig-like C2-type 2">
    <location>
        <begin position="295"/>
        <end position="365"/>
    </location>
</feature>
<feature type="domain" description="Protein kinase" evidence="7">
    <location>
        <begin position="538"/>
        <end position="807"/>
    </location>
</feature>
<feature type="region of interest" description="Interaction with MAPK8IP3/JIP3" evidence="4">
    <location>
        <begin position="455"/>
        <end position="466"/>
    </location>
</feature>
<feature type="region of interest" description="Disordered" evidence="9">
    <location>
        <begin position="475"/>
        <end position="498"/>
    </location>
</feature>
<feature type="compositionally biased region" description="Polar residues" evidence="9">
    <location>
        <begin position="485"/>
        <end position="495"/>
    </location>
</feature>
<feature type="active site" description="Proton acceptor" evidence="7 8">
    <location>
        <position position="676"/>
    </location>
</feature>
<feature type="binding site" evidence="7">
    <location>
        <begin position="544"/>
        <end position="552"/>
    </location>
    <ligand>
        <name>ATP</name>
        <dbReference type="ChEBI" id="CHEBI:30616"/>
    </ligand>
</feature>
<feature type="binding site" evidence="7">
    <location>
        <position position="572"/>
    </location>
    <ligand>
        <name>ATP</name>
        <dbReference type="ChEBI" id="CHEBI:30616"/>
    </ligand>
</feature>
<feature type="site" description="Interaction with SHC1" evidence="1">
    <location>
        <position position="516"/>
    </location>
</feature>
<feature type="site" description="Interaction with SH2D1A" evidence="1">
    <location>
        <position position="706"/>
    </location>
</feature>
<feature type="site" description="Interaction with PLCG1" evidence="1">
    <location>
        <position position="817"/>
    </location>
</feature>
<feature type="modified residue" description="Phosphotyrosine; by autocatalysis" evidence="3">
    <location>
        <position position="516"/>
    </location>
</feature>
<feature type="modified residue" description="Phosphotyrosine; by autocatalysis" evidence="4">
    <location>
        <position position="702"/>
    </location>
</feature>
<feature type="modified residue" description="Phosphotyrosine; by autocatalysis" evidence="4">
    <location>
        <position position="706"/>
    </location>
</feature>
<feature type="modified residue" description="Phosphotyrosine; by autocatalysis" evidence="4">
    <location>
        <position position="707"/>
    </location>
</feature>
<feature type="modified residue" description="Phosphotyrosine; by autocatalysis" evidence="4">
    <location>
        <position position="817"/>
    </location>
</feature>
<feature type="glycosylation site" description="N-linked (GlcNAc...) asparagine" evidence="15 21">
    <location>
        <position position="67"/>
    </location>
</feature>
<feature type="glycosylation site" description="N-linked (GlcNAc...) asparagine" evidence="21">
    <location>
        <position position="95"/>
    </location>
</feature>
<feature type="glycosylation site" description="N-linked (GlcNAc...) asparagine" evidence="15 21">
    <location>
        <position position="121"/>
    </location>
</feature>
<feature type="glycosylation site" description="N-linked (GlcNAc...) asparagine" evidence="21">
    <location>
        <position position="178"/>
    </location>
</feature>
<feature type="glycosylation site" description="N-linked (GlcNAc...) asparagine" evidence="21">
    <location>
        <position position="205"/>
    </location>
</feature>
<feature type="glycosylation site" description="N-linked (GlcNAc...) asparagine" evidence="21">
    <location>
        <position position="241"/>
    </location>
</feature>
<feature type="glycosylation site" description="N-linked (GlcNAc...) asparagine" evidence="15 21">
    <location>
        <position position="254"/>
    </location>
</feature>
<feature type="glycosylation site" description="N-linked (GlcNAc...) asparagine" evidence="21">
    <location>
        <position position="280"/>
    </location>
</feature>
<feature type="glycosylation site" description="N-linked (GlcNAc...) asparagine" evidence="5">
    <location>
        <position position="325"/>
    </location>
</feature>
<feature type="glycosylation site" description="N-linked (GlcNAc...) asparagine" evidence="21">
    <location>
        <position position="338"/>
    </location>
</feature>
<feature type="glycosylation site" description="N-linked (GlcNAc...) asparagine" evidence="21">
    <location>
        <position position="412"/>
    </location>
</feature>
<feature type="disulfide bond" evidence="6 21">
    <location>
        <begin position="32"/>
        <end position="38"/>
    </location>
</feature>
<feature type="disulfide bond" evidence="6 21">
    <location>
        <begin position="36"/>
        <end position="45"/>
    </location>
</feature>
<feature type="disulfide bond" evidence="6 21">
    <location>
        <begin position="152"/>
        <end position="176"/>
    </location>
</feature>
<feature type="disulfide bond" evidence="6 21">
    <location>
        <begin position="154"/>
        <end position="194"/>
    </location>
</feature>
<feature type="disulfide bond" evidence="6 21">
    <location>
        <begin position="218"/>
        <end position="266"/>
    </location>
</feature>
<feature type="disulfide bond" evidence="6 11 12 21 32 33 34">
    <location>
        <begin position="302"/>
        <end position="345"/>
    </location>
</feature>
<feature type="splice variant" id="VSP_042177" description="In isoform TrkB-N-T1." evidence="25">
    <location>
        <begin position="1"/>
        <end position="156"/>
    </location>
</feature>
<feature type="splice variant" id="VSP_041942" description="In isoform 4 and isoform 5." evidence="24">
    <original>K</original>
    <variation>KDFSWFGFGKVKSRQGV</variation>
    <location>
        <position position="465"/>
    </location>
</feature>
<feature type="splice variant" id="VSP_002901" description="In isoform TrkB-T1 and isoform TrkB-N-T1." evidence="24 25 26 27 28 29">
    <original>PASVISNDDDS</original>
    <variation>FVLFHKIPLDG</variation>
    <location>
        <begin position="467"/>
        <end position="477"/>
    </location>
</feature>
<feature type="splice variant" id="VSP_002902" description="In isoform TrkB-T1 and isoform TrkB-N-T1." evidence="24 25 26 27 28 29">
    <location>
        <begin position="478"/>
        <end position="822"/>
    </location>
</feature>
<feature type="splice variant" id="VSP_002903" description="In isoform TrkB-T-Shc and isoform 5." evidence="24">
    <original>FVQHIKRHN</original>
    <variation>WPRGSPKTA</variation>
    <location>
        <begin position="529"/>
        <end position="537"/>
    </location>
</feature>
<feature type="splice variant" id="VSP_002904" description="In isoform TrkB-T-Shc and isoform 5." evidence="24">
    <location>
        <begin position="538"/>
        <end position="822"/>
    </location>
</feature>
<feature type="splice variant" id="VSP_042178" description="In isoform TrkB-T-TK." evidence="30">
    <original>GGHTMLPIRWMPPESIMYRKFTTESD</original>
    <variation>SSCADQRPQGPLSLRDPCCICLLRLS</variation>
    <location>
        <begin position="710"/>
        <end position="735"/>
    </location>
</feature>
<feature type="splice variant" id="VSP_042179" description="In isoform TrkB-T-TK." evidence="30">
    <location>
        <begin position="736"/>
        <end position="822"/>
    </location>
</feature>
<feature type="sequence variant" id="VAR_041470" description="In a lung adenocarcinoma sample; somatic mutation." evidence="16">
    <original>L</original>
    <variation>F</variation>
    <location>
        <position position="138"/>
    </location>
</feature>
<feature type="sequence variant" id="VAR_016320" evidence="23">
    <original>G</original>
    <variation>R</variation>
    <location>
        <position position="309"/>
    </location>
</feature>
<feature type="sequence variant" id="VAR_011973" description="In dbSNP:rs1047856.">
    <original>N</original>
    <variation>Y</variation>
    <location>
        <position position="338"/>
    </location>
</feature>
<feature type="sequence variant" id="VAR_080659" description="In DEE58; uncertain significance; dbSNP:rs886041091." evidence="19">
    <original>Y</original>
    <variation>C</variation>
    <location>
        <position position="434"/>
    </location>
</feature>
<feature type="sequence variant" id="VAR_080660" description="In OBHD." evidence="18">
    <location>
        <begin position="444"/>
        <end position="822"/>
    </location>
</feature>
<feature type="sequence variant" id="VAR_049715" description="In dbSNP:rs1075108.">
    <original>G</original>
    <variation>V</variation>
    <location>
        <position position="545"/>
    </location>
</feature>
<feature type="sequence variant" id="VAR_046518" description="In a lung carcinoma sample; somatic mutation." evidence="17">
    <original>M</original>
    <variation>I</variation>
    <location>
        <position position="697"/>
    </location>
</feature>
<feature type="sequence variant" id="VAR_046519" description="In a lung carcinoma sample; somatic mutation." evidence="17">
    <original>R</original>
    <variation>G</variation>
    <location>
        <position position="699"/>
    </location>
</feature>
<feature type="sequence variant" id="VAR_080661" description="In OBHD; uncertain significance; dbSNP:rs1554774973." evidence="19">
    <original>T</original>
    <variation>I</variation>
    <location>
        <position position="704"/>
    </location>
</feature>
<feature type="sequence variant" id="VAR_065890" description="In OBHD; expressed normally on the cell surface; results in markedly impaired ligand-induced phosphorylation as well as impaired downstream MAPK1 phosphorylation; dbSNP:rs121434633." evidence="14">
    <original>Y</original>
    <variation>C</variation>
    <location>
        <position position="706"/>
    </location>
</feature>
<feature type="sequence variant" id="VAR_046520" description="In a lung carcinoma sample; somatic mutation; dbSNP:rs1324578301." evidence="17">
    <original>R</original>
    <variation>C</variation>
    <location>
        <position position="718"/>
    </location>
</feature>
<feature type="strand" evidence="39">
    <location>
        <begin position="285"/>
        <end position="292"/>
    </location>
</feature>
<feature type="strand" evidence="35">
    <location>
        <begin position="300"/>
        <end position="308"/>
    </location>
</feature>
<feature type="strand" evidence="35">
    <location>
        <begin position="314"/>
        <end position="319"/>
    </location>
</feature>
<feature type="strand" evidence="35">
    <location>
        <begin position="322"/>
        <end position="324"/>
    </location>
</feature>
<feature type="strand" evidence="35">
    <location>
        <begin position="328"/>
        <end position="337"/>
    </location>
</feature>
<feature type="strand" evidence="35">
    <location>
        <begin position="339"/>
        <end position="350"/>
    </location>
</feature>
<feature type="helix" evidence="35">
    <location>
        <begin position="353"/>
        <end position="355"/>
    </location>
</feature>
<feature type="strand" evidence="35">
    <location>
        <begin position="357"/>
        <end position="364"/>
    </location>
</feature>
<feature type="strand" evidence="35">
    <location>
        <begin position="369"/>
        <end position="376"/>
    </location>
</feature>
<feature type="strand" evidence="39">
    <location>
        <begin position="380"/>
        <end position="382"/>
    </location>
</feature>
<feature type="helix" evidence="40">
    <location>
        <begin position="428"/>
        <end position="460"/>
    </location>
</feature>
<feature type="strand" evidence="40">
    <location>
        <begin position="462"/>
        <end position="464"/>
    </location>
</feature>
<feature type="strand" evidence="36">
    <location>
        <begin position="500"/>
        <end position="503"/>
    </location>
</feature>
<feature type="strand" evidence="36">
    <location>
        <begin position="506"/>
        <end position="512"/>
    </location>
</feature>
<feature type="turn" evidence="36">
    <location>
        <begin position="515"/>
        <end position="517"/>
    </location>
</feature>
<feature type="helix" evidence="37">
    <location>
        <begin position="535"/>
        <end position="537"/>
    </location>
</feature>
<feature type="strand" evidence="37">
    <location>
        <begin position="538"/>
        <end position="545"/>
    </location>
</feature>
<feature type="strand" evidence="37">
    <location>
        <begin position="552"/>
        <end position="557"/>
    </location>
</feature>
<feature type="strand" evidence="37">
    <location>
        <begin position="567"/>
        <end position="574"/>
    </location>
</feature>
<feature type="helix" evidence="37">
    <location>
        <begin position="579"/>
        <end position="592"/>
    </location>
</feature>
<feature type="strand" evidence="37">
    <location>
        <begin position="603"/>
        <end position="607"/>
    </location>
</feature>
<feature type="strand" evidence="37">
    <location>
        <begin position="609"/>
        <end position="618"/>
    </location>
</feature>
<feature type="helix" evidence="37">
    <location>
        <begin position="625"/>
        <end position="631"/>
    </location>
</feature>
<feature type="helix" evidence="37">
    <location>
        <begin position="634"/>
        <end position="638"/>
    </location>
</feature>
<feature type="strand" evidence="38">
    <location>
        <begin position="641"/>
        <end position="643"/>
    </location>
</feature>
<feature type="helix" evidence="37">
    <location>
        <begin position="650"/>
        <end position="669"/>
    </location>
</feature>
<feature type="helix" evidence="37">
    <location>
        <begin position="679"/>
        <end position="681"/>
    </location>
</feature>
<feature type="strand" evidence="37">
    <location>
        <begin position="682"/>
        <end position="684"/>
    </location>
</feature>
<feature type="helix" evidence="37">
    <location>
        <begin position="686"/>
        <end position="688"/>
    </location>
</feature>
<feature type="strand" evidence="37">
    <location>
        <begin position="690"/>
        <end position="692"/>
    </location>
</feature>
<feature type="helix" evidence="37">
    <location>
        <begin position="698"/>
        <end position="701"/>
    </location>
</feature>
<feature type="helix" evidence="37">
    <location>
        <begin position="703"/>
        <end position="705"/>
    </location>
</feature>
<feature type="strand" evidence="37">
    <location>
        <begin position="707"/>
        <end position="709"/>
    </location>
</feature>
<feature type="turn" evidence="37">
    <location>
        <begin position="710"/>
        <end position="712"/>
    </location>
</feature>
<feature type="strand" evidence="37">
    <location>
        <begin position="713"/>
        <end position="715"/>
    </location>
</feature>
<feature type="helix" evidence="37">
    <location>
        <begin position="717"/>
        <end position="719"/>
    </location>
</feature>
<feature type="helix" evidence="37">
    <location>
        <begin position="722"/>
        <end position="727"/>
    </location>
</feature>
<feature type="helix" evidence="37">
    <location>
        <begin position="732"/>
        <end position="747"/>
    </location>
</feature>
<feature type="turn" evidence="37">
    <location>
        <begin position="748"/>
        <end position="750"/>
    </location>
</feature>
<feature type="turn" evidence="37">
    <location>
        <begin position="753"/>
        <end position="756"/>
    </location>
</feature>
<feature type="helix" evidence="37">
    <location>
        <begin position="759"/>
        <end position="768"/>
    </location>
</feature>
<feature type="helix" evidence="37">
    <location>
        <begin position="780"/>
        <end position="789"/>
    </location>
</feature>
<feature type="helix" evidence="37">
    <location>
        <begin position="794"/>
        <end position="796"/>
    </location>
</feature>
<feature type="helix" evidence="37">
    <location>
        <begin position="800"/>
        <end position="813"/>
    </location>
</feature>
<name>NTRK2_HUMAN</name>
<sequence>MSSWIRWHGPAMARLWGFCWLVVGFWRAAFACPTSCKCSASRIWCSDPSPGIVAFPRLEPNSVDPENITEIFIANQKRLEIINEDDVEAYVGLRNLTIVDSGLKFVAHKAFLKNSNLQHINFTRNKLTSLSRKHFRHLDLSELILVGNPFTCSCDIMWIKTLQEAKSSPDTQDLYCLNESSKNIPLANLQIPNCGLPSANLAAPNLTVEEGKSITLSCSVAGDPVPNMYWDVGNLVSKHMNETSHTQGSLRITNISSDDSGKQISCVAENLVGEDQDSVNLTVHFAPTITFLESPTSDHHWCIPFTVKGNPKPALQWFYNGAILNESKYICTKIHVTNHTEYHGCLQLDNPTHMNNGDYTLIAKNEYGKDEKQISAHFMGWPGIDDGANPNYPDVIYEDYGTAANDIGDTTNRSNEIPSTDVTDKTGREHLSVYAVVVIASVVGFCLLVMLFLLKLARHSKFGMKGPASVISNDDDSASPLHHISNGSNTPSSSEGGPDAVIIGMTKIPVIENPQYFGITNSQLKPDTFVQHIKRHNIVLKRELGEGAFGKVFLAECYNLCPEQDKILVAVKTLKDASDNARKDFHREAELLTNLQHEHIVKFYGVCVEGDPLIMVFEYMKHGDLNKFLRAHGPDAVLMAEGNPPTELTQSQMLHIAQQIAAGMVYLASQHFVHRDLATRNCLVGENLLVKIGDFGMSRDVYSTDYYRVGGHTMLPIRWMPPESIMYRKFTTESDVWSLGVVLWEIFTYGKQPWYQLSNNEVIECITQGRVLQRPRTCPQEVYELMLGCWQREPHMRKNIKGIHTLLQNLAKASPVYLDILG</sequence>
<accession>Q16620</accession>
<accession>B1ANZ4</accession>
<accession>B4DFV9</accession>
<accession>Q16675</accession>
<accession>Q59GJ1</accession>
<accession>Q8WXJ5</accession>
<accession>Q8WXJ6</accession>
<accession>Q8WXJ7</accession>
<evidence type="ECO:0000250" key="1"/>
<evidence type="ECO:0000250" key="2">
    <source>
        <dbReference type="UniProtKB" id="P04629"/>
    </source>
</evidence>
<evidence type="ECO:0000250" key="3">
    <source>
        <dbReference type="UniProtKB" id="P15209"/>
    </source>
</evidence>
<evidence type="ECO:0000250" key="4">
    <source>
        <dbReference type="UniProtKB" id="Q63604"/>
    </source>
</evidence>
<evidence type="ECO:0000255" key="5"/>
<evidence type="ECO:0000255" key="6">
    <source>
        <dbReference type="PROSITE-ProRule" id="PRU00114"/>
    </source>
</evidence>
<evidence type="ECO:0000255" key="7">
    <source>
        <dbReference type="PROSITE-ProRule" id="PRU00159"/>
    </source>
</evidence>
<evidence type="ECO:0000255" key="8">
    <source>
        <dbReference type="PROSITE-ProRule" id="PRU10028"/>
    </source>
</evidence>
<evidence type="ECO:0000256" key="9">
    <source>
        <dbReference type="SAM" id="MobiDB-lite"/>
    </source>
</evidence>
<evidence type="ECO:0000269" key="10">
    <source>
    </source>
</evidence>
<evidence type="ECO:0000269" key="11">
    <source>
    </source>
</evidence>
<evidence type="ECO:0000269" key="12">
    <source>
    </source>
</evidence>
<evidence type="ECO:0000269" key="13">
    <source>
    </source>
</evidence>
<evidence type="ECO:0000269" key="14">
    <source>
    </source>
</evidence>
<evidence type="ECO:0000269" key="15">
    <source>
    </source>
</evidence>
<evidence type="ECO:0000269" key="16">
    <source>
    </source>
</evidence>
<evidence type="ECO:0000269" key="17">
    <source>
    </source>
</evidence>
<evidence type="ECO:0000269" key="18">
    <source>
    </source>
</evidence>
<evidence type="ECO:0000269" key="19">
    <source>
    </source>
</evidence>
<evidence type="ECO:0000269" key="20">
    <source>
    </source>
</evidence>
<evidence type="ECO:0000269" key="21">
    <source>
    </source>
</evidence>
<evidence type="ECO:0000269" key="22">
    <source>
    </source>
</evidence>
<evidence type="ECO:0000269" key="23">
    <source ref="5"/>
</evidence>
<evidence type="ECO:0000303" key="24">
    <source>
    </source>
</evidence>
<evidence type="ECO:0000303" key="25">
    <source>
    </source>
</evidence>
<evidence type="ECO:0000303" key="26">
    <source>
    </source>
</evidence>
<evidence type="ECO:0000303" key="27">
    <source>
    </source>
</evidence>
<evidence type="ECO:0000303" key="28">
    <source>
    </source>
</evidence>
<evidence type="ECO:0000303" key="29">
    <source ref="5"/>
</evidence>
<evidence type="ECO:0000303" key="30">
    <source ref="7"/>
</evidence>
<evidence type="ECO:0000305" key="31"/>
<evidence type="ECO:0007744" key="32">
    <source>
        <dbReference type="PDB" id="1HCF"/>
    </source>
</evidence>
<evidence type="ECO:0007744" key="33">
    <source>
        <dbReference type="PDB" id="1WWB"/>
    </source>
</evidence>
<evidence type="ECO:0007744" key="34">
    <source>
        <dbReference type="PDB" id="5MO9"/>
    </source>
</evidence>
<evidence type="ECO:0007829" key="35">
    <source>
        <dbReference type="PDB" id="1WWB"/>
    </source>
</evidence>
<evidence type="ECO:0007829" key="36">
    <source>
        <dbReference type="PDB" id="2MFQ"/>
    </source>
</evidence>
<evidence type="ECO:0007829" key="37">
    <source>
        <dbReference type="PDB" id="4ASZ"/>
    </source>
</evidence>
<evidence type="ECO:0007829" key="38">
    <source>
        <dbReference type="PDB" id="4AT5"/>
    </source>
</evidence>
<evidence type="ECO:0007829" key="39">
    <source>
        <dbReference type="PDB" id="5MO9"/>
    </source>
</evidence>
<evidence type="ECO:0007829" key="40">
    <source>
        <dbReference type="PDB" id="8OYD"/>
    </source>
</evidence>
<organism>
    <name type="scientific">Homo sapiens</name>
    <name type="common">Human</name>
    <dbReference type="NCBI Taxonomy" id="9606"/>
    <lineage>
        <taxon>Eukaryota</taxon>
        <taxon>Metazoa</taxon>
        <taxon>Chordata</taxon>
        <taxon>Craniata</taxon>
        <taxon>Vertebrata</taxon>
        <taxon>Euteleostomi</taxon>
        <taxon>Mammalia</taxon>
        <taxon>Eutheria</taxon>
        <taxon>Euarchontoglires</taxon>
        <taxon>Primates</taxon>
        <taxon>Haplorrhini</taxon>
        <taxon>Catarrhini</taxon>
        <taxon>Hominidae</taxon>
        <taxon>Homo</taxon>
    </lineage>
</organism>
<protein>
    <recommendedName>
        <fullName>BDNF/NT-3 growth factors receptor</fullName>
        <ecNumber evidence="14">2.7.10.1</ecNumber>
    </recommendedName>
    <alternativeName>
        <fullName>GP145-TrkB</fullName>
        <shortName>Trk-B</shortName>
    </alternativeName>
    <alternativeName>
        <fullName>Neurotrophic tyrosine kinase receptor type 2</fullName>
    </alternativeName>
    <alternativeName>
        <fullName>TrkB tyrosine kinase</fullName>
    </alternativeName>
    <alternativeName>
        <fullName>Tropomyosin-related kinase B</fullName>
    </alternativeName>
</protein>